<proteinExistence type="evidence at protein level"/>
<name>SRC_RAT</name>
<organism>
    <name type="scientific">Rattus norvegicus</name>
    <name type="common">Rat</name>
    <dbReference type="NCBI Taxonomy" id="10116"/>
    <lineage>
        <taxon>Eukaryota</taxon>
        <taxon>Metazoa</taxon>
        <taxon>Chordata</taxon>
        <taxon>Craniata</taxon>
        <taxon>Vertebrata</taxon>
        <taxon>Euteleostomi</taxon>
        <taxon>Mammalia</taxon>
        <taxon>Eutheria</taxon>
        <taxon>Euarchontoglires</taxon>
        <taxon>Glires</taxon>
        <taxon>Rodentia</taxon>
        <taxon>Myomorpha</taxon>
        <taxon>Muroidea</taxon>
        <taxon>Muridae</taxon>
        <taxon>Murinae</taxon>
        <taxon>Rattus</taxon>
    </lineage>
</organism>
<reference key="1">
    <citation type="submission" date="1999-02" db="EMBL/GenBank/DDBJ databases">
        <title>Rattus norvegicus proto-oncogene encoding tyrosine-protein kinase pp60-c-src.</title>
        <authorList>
            <person name="Stockand J.D."/>
            <person name="Al-Khalili O."/>
            <person name="Spier B.J."/>
            <person name="Eaton D.C."/>
        </authorList>
    </citation>
    <scope>NUCLEOTIDE SEQUENCE [MRNA] (ISOFORM 1)</scope>
    <source>
        <strain>Sprague-Dawley</strain>
        <tissue>Testis</tissue>
    </source>
</reference>
<reference key="2">
    <citation type="journal article" date="2001" name="Neuropharmacology">
        <title>Increased expression of neuronal Src and tyrosine phosphorylation of NMDA receptors in rat brain after systemic treatment with MK-801.</title>
        <authorList>
            <person name="Linden A."/>
            <person name="Storvik M."/>
            <person name="Lakso M."/>
            <person name="Haapasalo A."/>
            <person name="Lee D."/>
            <person name="Witkin J.M."/>
            <person name="Sei Y."/>
            <person name="Castren E."/>
            <person name="Wong G."/>
        </authorList>
    </citation>
    <scope>NUCLEOTIDE SEQUENCE [MRNA] (ISOFORM 2)</scope>
    <scope>TISSUE SPECIFICITY</scope>
    <scope>INDUCTION</scope>
    <source>
        <strain>Wistar</strain>
        <tissue>Temporal cortex</tissue>
    </source>
</reference>
<reference key="3">
    <citation type="journal article" date="2004" name="Nature">
        <title>Genome sequence of the Brown Norway rat yields insights into mammalian evolution.</title>
        <authorList>
            <person name="Gibbs R.A."/>
            <person name="Weinstock G.M."/>
            <person name="Metzker M.L."/>
            <person name="Muzny D.M."/>
            <person name="Sodergren E.J."/>
            <person name="Scherer S."/>
            <person name="Scott G."/>
            <person name="Steffen D."/>
            <person name="Worley K.C."/>
            <person name="Burch P.E."/>
            <person name="Okwuonu G."/>
            <person name="Hines S."/>
            <person name="Lewis L."/>
            <person name="Deramo C."/>
            <person name="Delgado O."/>
            <person name="Dugan-Rocha S."/>
            <person name="Miner G."/>
            <person name="Morgan M."/>
            <person name="Hawes A."/>
            <person name="Gill R."/>
            <person name="Holt R.A."/>
            <person name="Adams M.D."/>
            <person name="Amanatides P.G."/>
            <person name="Baden-Tillson H."/>
            <person name="Barnstead M."/>
            <person name="Chin S."/>
            <person name="Evans C.A."/>
            <person name="Ferriera S."/>
            <person name="Fosler C."/>
            <person name="Glodek A."/>
            <person name="Gu Z."/>
            <person name="Jennings D."/>
            <person name="Kraft C.L."/>
            <person name="Nguyen T."/>
            <person name="Pfannkoch C.M."/>
            <person name="Sitter C."/>
            <person name="Sutton G.G."/>
            <person name="Venter J.C."/>
            <person name="Woodage T."/>
            <person name="Smith D."/>
            <person name="Lee H.-M."/>
            <person name="Gustafson E."/>
            <person name="Cahill P."/>
            <person name="Kana A."/>
            <person name="Doucette-Stamm L."/>
            <person name="Weinstock K."/>
            <person name="Fechtel K."/>
            <person name="Weiss R.B."/>
            <person name="Dunn D.M."/>
            <person name="Green E.D."/>
            <person name="Blakesley R.W."/>
            <person name="Bouffard G.G."/>
            <person name="De Jong P.J."/>
            <person name="Osoegawa K."/>
            <person name="Zhu B."/>
            <person name="Marra M."/>
            <person name="Schein J."/>
            <person name="Bosdet I."/>
            <person name="Fjell C."/>
            <person name="Jones S."/>
            <person name="Krzywinski M."/>
            <person name="Mathewson C."/>
            <person name="Siddiqui A."/>
            <person name="Wye N."/>
            <person name="McPherson J."/>
            <person name="Zhao S."/>
            <person name="Fraser C.M."/>
            <person name="Shetty J."/>
            <person name="Shatsman S."/>
            <person name="Geer K."/>
            <person name="Chen Y."/>
            <person name="Abramzon S."/>
            <person name="Nierman W.C."/>
            <person name="Havlak P.H."/>
            <person name="Chen R."/>
            <person name="Durbin K.J."/>
            <person name="Egan A."/>
            <person name="Ren Y."/>
            <person name="Song X.-Z."/>
            <person name="Li B."/>
            <person name="Liu Y."/>
            <person name="Qin X."/>
            <person name="Cawley S."/>
            <person name="Cooney A.J."/>
            <person name="D'Souza L.M."/>
            <person name="Martin K."/>
            <person name="Wu J.Q."/>
            <person name="Gonzalez-Garay M.L."/>
            <person name="Jackson A.R."/>
            <person name="Kalafus K.J."/>
            <person name="McLeod M.P."/>
            <person name="Milosavljevic A."/>
            <person name="Virk D."/>
            <person name="Volkov A."/>
            <person name="Wheeler D.A."/>
            <person name="Zhang Z."/>
            <person name="Bailey J.A."/>
            <person name="Eichler E.E."/>
            <person name="Tuzun E."/>
            <person name="Birney E."/>
            <person name="Mongin E."/>
            <person name="Ureta-Vidal A."/>
            <person name="Woodwark C."/>
            <person name="Zdobnov E."/>
            <person name="Bork P."/>
            <person name="Suyama M."/>
            <person name="Torrents D."/>
            <person name="Alexandersson M."/>
            <person name="Trask B.J."/>
            <person name="Young J.M."/>
            <person name="Huang H."/>
            <person name="Wang H."/>
            <person name="Xing H."/>
            <person name="Daniels S."/>
            <person name="Gietzen D."/>
            <person name="Schmidt J."/>
            <person name="Stevens K."/>
            <person name="Vitt U."/>
            <person name="Wingrove J."/>
            <person name="Camara F."/>
            <person name="Mar Alba M."/>
            <person name="Abril J.F."/>
            <person name="Guigo R."/>
            <person name="Smit A."/>
            <person name="Dubchak I."/>
            <person name="Rubin E.M."/>
            <person name="Couronne O."/>
            <person name="Poliakov A."/>
            <person name="Huebner N."/>
            <person name="Ganten D."/>
            <person name="Goesele C."/>
            <person name="Hummel O."/>
            <person name="Kreitler T."/>
            <person name="Lee Y.-A."/>
            <person name="Monti J."/>
            <person name="Schulz H."/>
            <person name="Zimdahl H."/>
            <person name="Himmelbauer H."/>
            <person name="Lehrach H."/>
            <person name="Jacob H.J."/>
            <person name="Bromberg S."/>
            <person name="Gullings-Handley J."/>
            <person name="Jensen-Seaman M.I."/>
            <person name="Kwitek A.E."/>
            <person name="Lazar J."/>
            <person name="Pasko D."/>
            <person name="Tonellato P.J."/>
            <person name="Twigger S."/>
            <person name="Ponting C.P."/>
            <person name="Duarte J.M."/>
            <person name="Rice S."/>
            <person name="Goodstadt L."/>
            <person name="Beatson S.A."/>
            <person name="Emes R.D."/>
            <person name="Winter E.E."/>
            <person name="Webber C."/>
            <person name="Brandt P."/>
            <person name="Nyakatura G."/>
            <person name="Adetobi M."/>
            <person name="Chiaromonte F."/>
            <person name="Elnitski L."/>
            <person name="Eswara P."/>
            <person name="Hardison R.C."/>
            <person name="Hou M."/>
            <person name="Kolbe D."/>
            <person name="Makova K."/>
            <person name="Miller W."/>
            <person name="Nekrutenko A."/>
            <person name="Riemer C."/>
            <person name="Schwartz S."/>
            <person name="Taylor J."/>
            <person name="Yang S."/>
            <person name="Zhang Y."/>
            <person name="Lindpaintner K."/>
            <person name="Andrews T.D."/>
            <person name="Caccamo M."/>
            <person name="Clamp M."/>
            <person name="Clarke L."/>
            <person name="Curwen V."/>
            <person name="Durbin R.M."/>
            <person name="Eyras E."/>
            <person name="Searle S.M."/>
            <person name="Cooper G.M."/>
            <person name="Batzoglou S."/>
            <person name="Brudno M."/>
            <person name="Sidow A."/>
            <person name="Stone E.A."/>
            <person name="Payseur B.A."/>
            <person name="Bourque G."/>
            <person name="Lopez-Otin C."/>
            <person name="Puente X.S."/>
            <person name="Chakrabarti K."/>
            <person name="Chatterji S."/>
            <person name="Dewey C."/>
            <person name="Pachter L."/>
            <person name="Bray N."/>
            <person name="Yap V.B."/>
            <person name="Caspi A."/>
            <person name="Tesler G."/>
            <person name="Pevzner P.A."/>
            <person name="Haussler D."/>
            <person name="Roskin K.M."/>
            <person name="Baertsch R."/>
            <person name="Clawson H."/>
            <person name="Furey T.S."/>
            <person name="Hinrichs A.S."/>
            <person name="Karolchik D."/>
            <person name="Kent W.J."/>
            <person name="Rosenbloom K.R."/>
            <person name="Trumbower H."/>
            <person name="Weirauch M."/>
            <person name="Cooper D.N."/>
            <person name="Stenson P.D."/>
            <person name="Ma B."/>
            <person name="Brent M."/>
            <person name="Arumugam M."/>
            <person name="Shteynberg D."/>
            <person name="Copley R.R."/>
            <person name="Taylor M.S."/>
            <person name="Riethman H."/>
            <person name="Mudunuri U."/>
            <person name="Peterson J."/>
            <person name="Guyer M."/>
            <person name="Felsenfeld A."/>
            <person name="Old S."/>
            <person name="Mockrin S."/>
            <person name="Collins F.S."/>
        </authorList>
    </citation>
    <scope>NUCLEOTIDE SEQUENCE [LARGE SCALE GENOMIC DNA]</scope>
    <source>
        <strain>Brown Norway</strain>
    </source>
</reference>
<reference key="4">
    <citation type="submission" date="2005-09" db="EMBL/GenBank/DDBJ databases">
        <authorList>
            <person name="Mural R.J."/>
            <person name="Adams M.D."/>
            <person name="Myers E.W."/>
            <person name="Smith H.O."/>
            <person name="Venter J.C."/>
        </authorList>
    </citation>
    <scope>NUCLEOTIDE SEQUENCE [LARGE SCALE GENOMIC DNA]</scope>
</reference>
<reference key="5">
    <citation type="submission" date="2005-07" db="EMBL/GenBank/DDBJ databases">
        <title>Genetic similarity between spontaneously hypertensive rats and Wistar-Kyoto rats in the coding regions of signal transduction proteins.</title>
        <authorList>
            <person name="Jackson E.K."/>
            <person name="Zhu C."/>
        </authorList>
    </citation>
    <scope>NUCLEOTIDE SEQUENCE [MRNA] OF 7-529 (ISOFORM 1)</scope>
    <source>
        <strain>SHR</strain>
        <strain>Wistar Kyoto</strain>
    </source>
</reference>
<reference key="6">
    <citation type="journal article" date="1996" name="Nature">
        <title>A role for Pyk2 and Src in linking G-protein-coupled receptors with MAP kinase activation.</title>
        <authorList>
            <person name="Dikic I."/>
            <person name="Tokiwa G."/>
            <person name="Lev S."/>
            <person name="Courtneidge S.A."/>
            <person name="Schlessinger J."/>
        </authorList>
    </citation>
    <scope>CATALYTIC ACTIVITY</scope>
    <scope>ACTIVITY REGULATION</scope>
    <scope>INTERACTION WITH PTK2B/PYK2</scope>
    <scope>PHOSPHORYLATION AT TYR-419</scope>
</reference>
<reference key="7">
    <citation type="journal article" date="2000" name="Proc. Natl. Acad. Sci. U.S.A.">
        <title>The proliferative and antiapoptotic effects of substance P are facilitated by formation of a beta -arrestin-dependent scaffolding complex.</title>
        <authorList>
            <person name="DeFea K.A."/>
            <person name="Vaughn Z.D."/>
            <person name="O'Bryan E.M."/>
            <person name="Nishijima D."/>
            <person name="Dery O."/>
            <person name="Bunnett N.W."/>
        </authorList>
    </citation>
    <scope>INTERACTION WITH ARRB1</scope>
</reference>
<reference key="8">
    <citation type="journal article" date="2002" name="J. Biol. Chem.">
        <title>Discoidin domain receptor 2 interacts with Src and Shc following its activation by type I collagen.</title>
        <authorList>
            <person name="Ikeda K."/>
            <person name="Wang L.H."/>
            <person name="Torres R."/>
            <person name="Zhao H."/>
            <person name="Olaso E."/>
            <person name="Eng F.J."/>
            <person name="Labrador P."/>
            <person name="Klein R."/>
            <person name="Lovett D."/>
            <person name="Yancopoulos G.D."/>
            <person name="Friedman S.L."/>
            <person name="Lin H.C."/>
        </authorList>
    </citation>
    <scope>INTERACTION WITH DDR2</scope>
</reference>
<reference key="9">
    <citation type="journal article" date="2003" name="J. Biol. Chem.">
        <title>Characterization of a novel negative regulator (DOC-2/DAB2) of c-Src in normal prostatic epithelium and cancer.</title>
        <authorList>
            <person name="Zhou J."/>
            <person name="Scholes J."/>
            <person name="Hsieh J.T."/>
        </authorList>
    </citation>
    <scope>INTERACTION WITH DAB2</scope>
</reference>
<reference key="10">
    <citation type="journal article" date="2005" name="J. Biol. Chem.">
        <title>Tyrosine 740 phosphorylation of discoidin domain receptor 2 by Src stimulates intramolecular autophosphorylation and Shc signaling complex formation.</title>
        <authorList>
            <person name="Yang K."/>
            <person name="Kim J.H."/>
            <person name="Kim H.J."/>
            <person name="Park I.S."/>
            <person name="Kim I.Y."/>
            <person name="Yang B.S."/>
        </authorList>
    </citation>
    <scope>FUNCTION</scope>
    <scope>INTERACTION WITH DDR2</scope>
</reference>
<reference key="11">
    <citation type="journal article" date="2009" name="J. Cell Biol.">
        <title>Homophilic adhesion and CEACAM1-S regulate dimerization of CEACAM1-L and recruitment of SHP-2 and c-Src.</title>
        <authorList>
            <person name="Mueller M.M."/>
            <person name="Klaile E."/>
            <person name="Vorontsova O."/>
            <person name="Singer B.B."/>
            <person name="Obrink B."/>
        </authorList>
    </citation>
    <scope>INTERACTION WITH CEACAM1</scope>
</reference>
<reference key="12">
    <citation type="journal article" date="2005" name="Oncogene">
        <title>The rat tyrosine phosphatase eta increases cell adhesion by activating c-Src through dephosphorylation of its inhibitory phosphotyrosine residue.</title>
        <authorList>
            <person name="Pera I.L."/>
            <person name="Iuliano R."/>
            <person name="Florio T."/>
            <person name="Susini C."/>
            <person name="Trapasso F."/>
            <person name="Santoro M."/>
            <person name="Chiariotti L."/>
            <person name="Schettini G."/>
            <person name="Viglietto G."/>
            <person name="Fusco A."/>
        </authorList>
    </citation>
    <scope>PHOSPHORYLATION AT TYR-530</scope>
    <scope>DEPHOSPHORYLATION AT TYR-530 BY PTPRJ</scope>
</reference>
<reference key="13">
    <citation type="journal article" date="2012" name="Nat. Commun.">
        <title>Quantitative maps of protein phosphorylation sites across 14 different rat organs and tissues.</title>
        <authorList>
            <person name="Lundby A."/>
            <person name="Secher A."/>
            <person name="Lage K."/>
            <person name="Nordsborg N.B."/>
            <person name="Dmytriyev A."/>
            <person name="Lundby C."/>
            <person name="Olsen J.V."/>
        </authorList>
    </citation>
    <scope>PHOSPHORYLATION [LARGE SCALE ANALYSIS] AT SER-17</scope>
    <scope>IDENTIFICATION BY MASS SPECTROMETRY [LARGE SCALE ANALYSIS]</scope>
</reference>
<reference key="14">
    <citation type="journal article" date="2015" name="FEBS Lett.">
        <title>The N2-Src neuronal splice variant of C-Src has altered SH3 domain ligand specificity and a higher constitutive activity than N1-Src.</title>
        <authorList>
            <person name="Keenan S."/>
            <person name="Lewis P.A."/>
            <person name="Wetherill S.J."/>
            <person name="Dunning C.J."/>
            <person name="Evans G.J."/>
        </authorList>
    </citation>
    <scope>FUNCTION (ISOFORMS 1; 2 AND 3)</scope>
    <scope>CATALYTIC ACTIVITY (ISOFORMS 1; 2 AND 3)</scope>
    <scope>ALTERNATIVE SPLICING</scope>
    <scope>PHOSPHORYLATION AT TYR-419 AND TYR-530</scope>
</reference>
<reference key="15">
    <citation type="journal article" date="2017" name="Sci. Rep.">
        <title>Inhibition of N1-Src kinase by a specific SH3 peptide ligand reveals a role for N1-Src in neurite elongation by L1-CAM.</title>
        <authorList>
            <person name="Keenan S."/>
            <person name="Wetherill S.J."/>
            <person name="Ugbode C.I."/>
            <person name="Chawla S."/>
            <person name="Brackenbury W.J."/>
            <person name="Evans G.J."/>
        </authorList>
    </citation>
    <scope>FUNCTION (ISOFORMS 2 AND 3)</scope>
    <scope>CATALYTIC ACTIVITY</scope>
</reference>
<dbReference type="EC" id="2.7.10.2" evidence="16 17 18"/>
<dbReference type="EMBL" id="AF130457">
    <property type="protein sequence ID" value="AAD24180.1"/>
    <property type="molecule type" value="mRNA"/>
</dbReference>
<dbReference type="EMBL" id="AF157016">
    <property type="protein sequence ID" value="AAF80335.1"/>
    <property type="molecule type" value="mRNA"/>
</dbReference>
<dbReference type="EMBL" id="AABR06027223">
    <property type="status" value="NOT_ANNOTATED_CDS"/>
    <property type="molecule type" value="Genomic_DNA"/>
</dbReference>
<dbReference type="EMBL" id="CH474005">
    <property type="protein sequence ID" value="EDL96675.1"/>
    <property type="molecule type" value="Genomic_DNA"/>
</dbReference>
<dbReference type="EMBL" id="CH474005">
    <property type="protein sequence ID" value="EDL96676.1"/>
    <property type="molecule type" value="Genomic_DNA"/>
</dbReference>
<dbReference type="EMBL" id="CH474005">
    <property type="protein sequence ID" value="EDL96677.1"/>
    <property type="molecule type" value="Genomic_DNA"/>
</dbReference>
<dbReference type="EMBL" id="CH474005">
    <property type="protein sequence ID" value="EDL96678.1"/>
    <property type="molecule type" value="Genomic_DNA"/>
</dbReference>
<dbReference type="EMBL" id="CH474005">
    <property type="protein sequence ID" value="EDL96679.1"/>
    <property type="molecule type" value="Genomic_DNA"/>
</dbReference>
<dbReference type="EMBL" id="DQ120509">
    <property type="protein sequence ID" value="AAZ23848.1"/>
    <property type="molecule type" value="mRNA"/>
</dbReference>
<dbReference type="EMBL" id="DQ120510">
    <property type="protein sequence ID" value="AAZ23849.1"/>
    <property type="molecule type" value="mRNA"/>
</dbReference>
<dbReference type="RefSeq" id="NP_001418418.1">
    <molecule id="Q9WUD9-1"/>
    <property type="nucleotide sequence ID" value="NM_001431489.1"/>
</dbReference>
<dbReference type="RefSeq" id="NP_001418419.1">
    <molecule id="Q9WUD9-1"/>
    <property type="nucleotide sequence ID" value="NM_001431490.1"/>
</dbReference>
<dbReference type="RefSeq" id="NP_001418420.1">
    <molecule id="Q9WUD9-1"/>
    <property type="nucleotide sequence ID" value="NM_001431491.1"/>
</dbReference>
<dbReference type="RefSeq" id="NP_001418421.1">
    <molecule id="Q9WUD9-1"/>
    <property type="nucleotide sequence ID" value="NM_001431492.1"/>
</dbReference>
<dbReference type="RefSeq" id="NP_001418422.1">
    <molecule id="Q9WUD9-2"/>
    <property type="nucleotide sequence ID" value="NM_001431493.1"/>
</dbReference>
<dbReference type="RefSeq" id="NP_114183.1">
    <molecule id="Q9WUD9-2"/>
    <property type="nucleotide sequence ID" value="NM_031977.2"/>
</dbReference>
<dbReference type="RefSeq" id="XP_008760609.1">
    <property type="nucleotide sequence ID" value="XM_008762387.2"/>
</dbReference>
<dbReference type="RefSeq" id="XP_008760610.1">
    <property type="nucleotide sequence ID" value="XM_008762388.2"/>
</dbReference>
<dbReference type="RefSeq" id="XP_017447554.1">
    <property type="nucleotide sequence ID" value="XM_017592065.1"/>
</dbReference>
<dbReference type="RefSeq" id="XP_017447555.1">
    <property type="nucleotide sequence ID" value="XM_017592066.1"/>
</dbReference>
<dbReference type="RefSeq" id="XP_017447556.1">
    <property type="nucleotide sequence ID" value="XM_017592067.1"/>
</dbReference>
<dbReference type="RefSeq" id="XP_017447557.1">
    <molecule id="Q9WUD9-2"/>
    <property type="nucleotide sequence ID" value="XM_017592068.3"/>
</dbReference>
<dbReference type="RefSeq" id="XP_017447558.1">
    <property type="nucleotide sequence ID" value="XM_017592069.1"/>
</dbReference>
<dbReference type="RefSeq" id="XP_017447559.1">
    <property type="nucleotide sequence ID" value="XM_017592070.1"/>
</dbReference>
<dbReference type="RefSeq" id="XP_017447560.1">
    <molecule id="Q9WUD9-2"/>
    <property type="nucleotide sequence ID" value="XM_017592071.3"/>
</dbReference>
<dbReference type="RefSeq" id="XP_017447561.1">
    <property type="nucleotide sequence ID" value="XM_017592072.1"/>
</dbReference>
<dbReference type="RefSeq" id="XP_038961886.1">
    <molecule id="Q9WUD9-2"/>
    <property type="nucleotide sequence ID" value="XM_039105958.2"/>
</dbReference>
<dbReference type="RefSeq" id="XP_038961888.1">
    <molecule id="Q9WUD9-2"/>
    <property type="nucleotide sequence ID" value="XM_039105960.2"/>
</dbReference>
<dbReference type="RefSeq" id="XP_038961889.1">
    <molecule id="Q9WUD9-2"/>
    <property type="nucleotide sequence ID" value="XM_039105961.2"/>
</dbReference>
<dbReference type="RefSeq" id="XP_038961890.1">
    <molecule id="Q9WUD9-2"/>
    <property type="nucleotide sequence ID" value="XM_039105962.2"/>
</dbReference>
<dbReference type="RefSeq" id="XP_038961891.1">
    <molecule id="Q9WUD9-2"/>
    <property type="nucleotide sequence ID" value="XM_039105963.2"/>
</dbReference>
<dbReference type="RefSeq" id="XP_038961892.1">
    <molecule id="Q9WUD9-2"/>
    <property type="nucleotide sequence ID" value="XM_039105964.2"/>
</dbReference>
<dbReference type="RefSeq" id="XP_038961893.1">
    <molecule id="Q9WUD9-2"/>
    <property type="nucleotide sequence ID" value="XM_039105965.2"/>
</dbReference>
<dbReference type="RefSeq" id="XP_063140734.1">
    <molecule id="Q9WUD9-2"/>
    <property type="nucleotide sequence ID" value="XM_063284664.1"/>
</dbReference>
<dbReference type="RefSeq" id="XP_063140735.1">
    <molecule id="Q9WUD9-2"/>
    <property type="nucleotide sequence ID" value="XM_063284665.1"/>
</dbReference>
<dbReference type="RefSeq" id="XP_063140736.1">
    <molecule id="Q9WUD9-2"/>
    <property type="nucleotide sequence ID" value="XM_063284666.1"/>
</dbReference>
<dbReference type="RefSeq" id="XP_063140737.1">
    <molecule id="Q9WUD9-2"/>
    <property type="nucleotide sequence ID" value="XM_063284667.1"/>
</dbReference>
<dbReference type="RefSeq" id="XP_063140738.1">
    <molecule id="Q9WUD9-1"/>
    <property type="nucleotide sequence ID" value="XM_063284668.1"/>
</dbReference>
<dbReference type="RefSeq" id="XP_063140739.1">
    <molecule id="Q9WUD9-1"/>
    <property type="nucleotide sequence ID" value="XM_063284669.1"/>
</dbReference>
<dbReference type="RefSeq" id="XP_063140742.1">
    <molecule id="Q9WUD9-1"/>
    <property type="nucleotide sequence ID" value="XM_063284672.1"/>
</dbReference>
<dbReference type="RefSeq" id="XP_063140743.1">
    <molecule id="Q9WUD9-1"/>
    <property type="nucleotide sequence ID" value="XM_063284673.1"/>
</dbReference>
<dbReference type="RefSeq" id="XP_063140745.1">
    <molecule id="Q9WUD9-1"/>
    <property type="nucleotide sequence ID" value="XM_063284675.1"/>
</dbReference>
<dbReference type="RefSeq" id="XP_063140746.1">
    <molecule id="Q9WUD9-1"/>
    <property type="nucleotide sequence ID" value="XM_063284676.1"/>
</dbReference>
<dbReference type="SMR" id="Q9WUD9"/>
<dbReference type="BioGRID" id="249840">
    <property type="interactions" value="22"/>
</dbReference>
<dbReference type="CORUM" id="Q9WUD9"/>
<dbReference type="DIP" id="DIP-42731N"/>
<dbReference type="ELM" id="Q9WUD9"/>
<dbReference type="FunCoup" id="Q9WUD9">
    <property type="interactions" value="2401"/>
</dbReference>
<dbReference type="IntAct" id="Q9WUD9">
    <property type="interactions" value="33"/>
</dbReference>
<dbReference type="MINT" id="Q9WUD9"/>
<dbReference type="STRING" id="10116.ENSRNOP00000071837"/>
<dbReference type="BindingDB" id="Q9WUD9"/>
<dbReference type="ChEMBL" id="CHEMBL3014"/>
<dbReference type="GlyGen" id="Q9WUD9">
    <property type="glycosylation" value="1 site"/>
</dbReference>
<dbReference type="iPTMnet" id="Q9WUD9"/>
<dbReference type="PhosphoSitePlus" id="Q9WUD9"/>
<dbReference type="jPOST" id="Q9WUD9"/>
<dbReference type="PaxDb" id="10116-ENSRNOP00000012739"/>
<dbReference type="PeptideAtlas" id="Q9WUD9"/>
<dbReference type="Ensembl" id="ENSRNOT00000012739.5">
    <molecule id="Q9WUD9-2"/>
    <property type="protein sequence ID" value="ENSRNOP00000012739.3"/>
    <property type="gene ID" value="ENSRNOG00000009495.7"/>
</dbReference>
<dbReference type="Ensembl" id="ENSRNOT00000080516.2">
    <molecule id="Q9WUD9-1"/>
    <property type="protein sequence ID" value="ENSRNOP00000071837.2"/>
    <property type="gene ID" value="ENSRNOG00000009495.7"/>
</dbReference>
<dbReference type="GeneID" id="83805"/>
<dbReference type="KEGG" id="rno:83805"/>
<dbReference type="UCSC" id="RGD:620795">
    <molecule id="Q9WUD9-1"/>
    <property type="organism name" value="rat"/>
</dbReference>
<dbReference type="AGR" id="RGD:620795"/>
<dbReference type="CTD" id="6714"/>
<dbReference type="RGD" id="620795">
    <property type="gene designation" value="Src"/>
</dbReference>
<dbReference type="eggNOG" id="KOG0197">
    <property type="taxonomic scope" value="Eukaryota"/>
</dbReference>
<dbReference type="GeneTree" id="ENSGT00940000158250"/>
<dbReference type="HOGENOM" id="CLU_000288_7_2_1"/>
<dbReference type="InParanoid" id="Q9WUD9"/>
<dbReference type="OMA" id="NYIAPVK"/>
<dbReference type="OrthoDB" id="11727at9989"/>
<dbReference type="TreeFam" id="TF351634"/>
<dbReference type="BRENDA" id="2.7.10.2">
    <property type="organism ID" value="5301"/>
</dbReference>
<dbReference type="Reactome" id="R-RNO-1227986">
    <property type="pathway name" value="Signaling by ERBB2"/>
</dbReference>
<dbReference type="Reactome" id="R-RNO-1251985">
    <property type="pathway name" value="Nuclear signaling by ERBB4"/>
</dbReference>
<dbReference type="Reactome" id="R-RNO-1253288">
    <property type="pathway name" value="Downregulation of ERBB4 signaling"/>
</dbReference>
<dbReference type="Reactome" id="R-RNO-1257604">
    <property type="pathway name" value="PIP3 activates AKT signaling"/>
</dbReference>
<dbReference type="Reactome" id="R-RNO-1295596">
    <property type="pathway name" value="Spry regulation of FGF signaling"/>
</dbReference>
<dbReference type="Reactome" id="R-RNO-1433557">
    <property type="pathway name" value="Signaling by SCF-KIT"/>
</dbReference>
<dbReference type="Reactome" id="R-RNO-1433559">
    <property type="pathway name" value="Regulation of KIT signaling"/>
</dbReference>
<dbReference type="Reactome" id="R-RNO-177929">
    <property type="pathway name" value="Signaling by EGFR"/>
</dbReference>
<dbReference type="Reactome" id="R-RNO-180292">
    <property type="pathway name" value="GAB1 signalosome"/>
</dbReference>
<dbReference type="Reactome" id="R-RNO-186763">
    <property type="pathway name" value="Downstream signal transduction"/>
</dbReference>
<dbReference type="Reactome" id="R-RNO-191650">
    <property type="pathway name" value="Regulation of gap junction activity"/>
</dbReference>
<dbReference type="Reactome" id="R-RNO-2029481">
    <property type="pathway name" value="FCGR activation"/>
</dbReference>
<dbReference type="Reactome" id="R-RNO-210990">
    <property type="pathway name" value="PECAM1 interactions"/>
</dbReference>
<dbReference type="Reactome" id="R-RNO-354192">
    <property type="pathway name" value="Integrin signaling"/>
</dbReference>
<dbReference type="Reactome" id="R-RNO-354194">
    <property type="pathway name" value="GRB2:SOS provides linkage to MAPK signaling for Integrins"/>
</dbReference>
<dbReference type="Reactome" id="R-RNO-372708">
    <property type="pathway name" value="p130Cas linkage to MAPK signaling for integrins"/>
</dbReference>
<dbReference type="Reactome" id="R-RNO-389356">
    <property type="pathway name" value="Co-stimulation by CD28"/>
</dbReference>
<dbReference type="Reactome" id="R-RNO-389513">
    <property type="pathway name" value="Co-inhibition by CTLA4"/>
</dbReference>
<dbReference type="Reactome" id="R-RNO-3928662">
    <property type="pathway name" value="EPHB-mediated forward signaling"/>
</dbReference>
<dbReference type="Reactome" id="R-RNO-3928663">
    <property type="pathway name" value="EPHA-mediated growth cone collapse"/>
</dbReference>
<dbReference type="Reactome" id="R-RNO-3928664">
    <property type="pathway name" value="Ephrin signaling"/>
</dbReference>
<dbReference type="Reactome" id="R-RNO-3928665">
    <property type="pathway name" value="EPH-ephrin mediated repulsion of cells"/>
</dbReference>
<dbReference type="Reactome" id="R-RNO-418592">
    <property type="pathway name" value="ADP signalling through P2Y purinoceptor 1"/>
</dbReference>
<dbReference type="Reactome" id="R-RNO-418594">
    <property type="pathway name" value="G alpha (i) signalling events"/>
</dbReference>
<dbReference type="Reactome" id="R-RNO-418885">
    <property type="pathway name" value="DCC mediated attractive signaling"/>
</dbReference>
<dbReference type="Reactome" id="R-RNO-430116">
    <property type="pathway name" value="GP1b-IX-V activation signalling"/>
</dbReference>
<dbReference type="Reactome" id="R-RNO-437239">
    <property type="pathway name" value="Recycling pathway of L1"/>
</dbReference>
<dbReference type="Reactome" id="R-RNO-4420097">
    <property type="pathway name" value="VEGFA-VEGFR2 Pathway"/>
</dbReference>
<dbReference type="Reactome" id="R-RNO-456926">
    <property type="pathway name" value="Thrombin signalling through proteinase activated receptors (PARs)"/>
</dbReference>
<dbReference type="Reactome" id="R-RNO-5218921">
    <property type="pathway name" value="VEGFR2 mediated cell proliferation"/>
</dbReference>
<dbReference type="Reactome" id="R-RNO-5607764">
    <property type="pathway name" value="CLEC7A (Dectin-1) signaling"/>
</dbReference>
<dbReference type="Reactome" id="R-RNO-5663220">
    <property type="pathway name" value="RHO GTPases Activate Formins"/>
</dbReference>
<dbReference type="Reactome" id="R-RNO-5673000">
    <property type="pathway name" value="RAF activation"/>
</dbReference>
<dbReference type="Reactome" id="R-RNO-5674135">
    <property type="pathway name" value="MAP2K and MAPK activation"/>
</dbReference>
<dbReference type="Reactome" id="R-RNO-6811558">
    <property type="pathway name" value="PI5P, PP2A and IER3 Regulate PI3K/AKT Signaling"/>
</dbReference>
<dbReference type="Reactome" id="R-RNO-69231">
    <property type="pathway name" value="Cyclin D associated events in G1"/>
</dbReference>
<dbReference type="Reactome" id="R-RNO-8853659">
    <property type="pathway name" value="RET signaling"/>
</dbReference>
<dbReference type="Reactome" id="R-RNO-8874081">
    <property type="pathway name" value="MET activates PTK2 signaling"/>
</dbReference>
<dbReference type="Reactome" id="R-RNO-8934903">
    <property type="pathway name" value="Receptor Mediated Mitophagy"/>
</dbReference>
<dbReference type="Reactome" id="R-RNO-8941858">
    <property type="pathway name" value="Regulation of RUNX3 expression and activity"/>
</dbReference>
<dbReference type="Reactome" id="R-RNO-9009391">
    <property type="pathway name" value="Extra-nuclear estrogen signaling"/>
</dbReference>
<dbReference type="Reactome" id="R-RNO-9603381">
    <property type="pathway name" value="Activated NTRK3 signals through PI3K"/>
</dbReference>
<dbReference type="PRO" id="PR:Q9WUD9"/>
<dbReference type="Proteomes" id="UP000002494">
    <property type="component" value="Chromosome 3"/>
</dbReference>
<dbReference type="Proteomes" id="UP000234681">
    <property type="component" value="Chromosome 3"/>
</dbReference>
<dbReference type="Bgee" id="ENSRNOG00000009495">
    <property type="expression patterns" value="Expressed in frontal cortex and 19 other cell types or tissues"/>
</dbReference>
<dbReference type="GO" id="GO:0005884">
    <property type="term" value="C:actin filament"/>
    <property type="evidence" value="ECO:0000266"/>
    <property type="project" value="RGD"/>
</dbReference>
<dbReference type="GO" id="GO:0030424">
    <property type="term" value="C:axon"/>
    <property type="evidence" value="ECO:0000314"/>
    <property type="project" value="RGD"/>
</dbReference>
<dbReference type="GO" id="GO:0005901">
    <property type="term" value="C:caveola"/>
    <property type="evidence" value="ECO:0000314"/>
    <property type="project" value="RGD"/>
</dbReference>
<dbReference type="GO" id="GO:0005911">
    <property type="term" value="C:cell-cell junction"/>
    <property type="evidence" value="ECO:0000250"/>
    <property type="project" value="UniProtKB"/>
</dbReference>
<dbReference type="GO" id="GO:0005737">
    <property type="term" value="C:cytoplasm"/>
    <property type="evidence" value="ECO:0000314"/>
    <property type="project" value="RGD"/>
</dbReference>
<dbReference type="GO" id="GO:0005856">
    <property type="term" value="C:cytoskeleton"/>
    <property type="evidence" value="ECO:0000250"/>
    <property type="project" value="UniProtKB"/>
</dbReference>
<dbReference type="GO" id="GO:0005829">
    <property type="term" value="C:cytosol"/>
    <property type="evidence" value="ECO:0000266"/>
    <property type="project" value="RGD"/>
</dbReference>
<dbReference type="GO" id="GO:1902737">
    <property type="term" value="C:dendritic filopodium"/>
    <property type="evidence" value="ECO:0000314"/>
    <property type="project" value="RGD"/>
</dbReference>
<dbReference type="GO" id="GO:0044294">
    <property type="term" value="C:dendritic growth cone"/>
    <property type="evidence" value="ECO:0000314"/>
    <property type="project" value="RGD"/>
</dbReference>
<dbReference type="GO" id="GO:0005925">
    <property type="term" value="C:focal adhesion"/>
    <property type="evidence" value="ECO:0000250"/>
    <property type="project" value="UniProtKB"/>
</dbReference>
<dbReference type="GO" id="GO:0098978">
    <property type="term" value="C:glutamatergic synapse"/>
    <property type="evidence" value="ECO:0000314"/>
    <property type="project" value="SynGO"/>
</dbReference>
<dbReference type="GO" id="GO:0005770">
    <property type="term" value="C:late endosome"/>
    <property type="evidence" value="ECO:0000266"/>
    <property type="project" value="RGD"/>
</dbReference>
<dbReference type="GO" id="GO:0005764">
    <property type="term" value="C:lysosome"/>
    <property type="evidence" value="ECO:0000266"/>
    <property type="project" value="RGD"/>
</dbReference>
<dbReference type="GO" id="GO:0016020">
    <property type="term" value="C:membrane"/>
    <property type="evidence" value="ECO:0000314"/>
    <property type="project" value="RGD"/>
</dbReference>
<dbReference type="GO" id="GO:0005743">
    <property type="term" value="C:mitochondrial inner membrane"/>
    <property type="evidence" value="ECO:0000250"/>
    <property type="project" value="UniProtKB"/>
</dbReference>
<dbReference type="GO" id="GO:0005739">
    <property type="term" value="C:mitochondrion"/>
    <property type="evidence" value="ECO:0000250"/>
    <property type="project" value="UniProtKB"/>
</dbReference>
<dbReference type="GO" id="GO:0099073">
    <property type="term" value="C:mitochondrion-derived vesicle"/>
    <property type="evidence" value="ECO:0000314"/>
    <property type="project" value="RGD"/>
</dbReference>
<dbReference type="GO" id="GO:0098984">
    <property type="term" value="C:neuron to neuron synapse"/>
    <property type="evidence" value="ECO:0000314"/>
    <property type="project" value="RGD"/>
</dbReference>
<dbReference type="GO" id="GO:0043025">
    <property type="term" value="C:neuronal cell body"/>
    <property type="evidence" value="ECO:0000314"/>
    <property type="project" value="RGD"/>
</dbReference>
<dbReference type="GO" id="GO:0005634">
    <property type="term" value="C:nucleus"/>
    <property type="evidence" value="ECO:0000250"/>
    <property type="project" value="UniProtKB"/>
</dbReference>
<dbReference type="GO" id="GO:0048471">
    <property type="term" value="C:perinuclear region of cytoplasm"/>
    <property type="evidence" value="ECO:0000250"/>
    <property type="project" value="UniProtKB"/>
</dbReference>
<dbReference type="GO" id="GO:0005886">
    <property type="term" value="C:plasma membrane"/>
    <property type="evidence" value="ECO:0000266"/>
    <property type="project" value="RGD"/>
</dbReference>
<dbReference type="GO" id="GO:0002102">
    <property type="term" value="C:podosome"/>
    <property type="evidence" value="ECO:0000266"/>
    <property type="project" value="RGD"/>
</dbReference>
<dbReference type="GO" id="GO:0099091">
    <property type="term" value="C:postsynaptic specialization, intracellular component"/>
    <property type="evidence" value="ECO:0000314"/>
    <property type="project" value="SynGO"/>
</dbReference>
<dbReference type="GO" id="GO:0032587">
    <property type="term" value="C:ruffle membrane"/>
    <property type="evidence" value="ECO:0000266"/>
    <property type="project" value="RGD"/>
</dbReference>
<dbReference type="GO" id="GO:0097060">
    <property type="term" value="C:synaptic membrane"/>
    <property type="evidence" value="ECO:0000314"/>
    <property type="project" value="RGD"/>
</dbReference>
<dbReference type="GO" id="GO:0005524">
    <property type="term" value="F:ATP binding"/>
    <property type="evidence" value="ECO:0007669"/>
    <property type="project" value="UniProtKB-KW"/>
</dbReference>
<dbReference type="GO" id="GO:0070700">
    <property type="term" value="F:BMP receptor binding"/>
    <property type="evidence" value="ECO:0000266"/>
    <property type="project" value="RGD"/>
</dbReference>
<dbReference type="GO" id="GO:0050839">
    <property type="term" value="F:cell adhesion molecule binding"/>
    <property type="evidence" value="ECO:0000353"/>
    <property type="project" value="RGD"/>
</dbReference>
<dbReference type="GO" id="GO:0071253">
    <property type="term" value="F:connexin binding"/>
    <property type="evidence" value="ECO:0000266"/>
    <property type="project" value="RGD"/>
</dbReference>
<dbReference type="GO" id="GO:0019899">
    <property type="term" value="F:enzyme binding"/>
    <property type="evidence" value="ECO:0000353"/>
    <property type="project" value="RGD"/>
</dbReference>
<dbReference type="GO" id="GO:0046875">
    <property type="term" value="F:ephrin receptor binding"/>
    <property type="evidence" value="ECO:0000266"/>
    <property type="project" value="RGD"/>
</dbReference>
<dbReference type="GO" id="GO:0020037">
    <property type="term" value="F:heme binding"/>
    <property type="evidence" value="ECO:0000250"/>
    <property type="project" value="UniProtKB"/>
</dbReference>
<dbReference type="GO" id="GO:0005158">
    <property type="term" value="F:insulin receptor binding"/>
    <property type="evidence" value="ECO:0000353"/>
    <property type="project" value="RGD"/>
</dbReference>
<dbReference type="GO" id="GO:0005178">
    <property type="term" value="F:integrin binding"/>
    <property type="evidence" value="ECO:0000266"/>
    <property type="project" value="RGD"/>
</dbReference>
<dbReference type="GO" id="GO:0035255">
    <property type="term" value="F:ionotropic glutamate receptor binding"/>
    <property type="evidence" value="ECO:0000353"/>
    <property type="project" value="Alzheimers_University_of_Toronto"/>
</dbReference>
<dbReference type="GO" id="GO:0016301">
    <property type="term" value="F:kinase activity"/>
    <property type="evidence" value="ECO:0000266"/>
    <property type="project" value="RGD"/>
</dbReference>
<dbReference type="GO" id="GO:0004715">
    <property type="term" value="F:non-membrane spanning protein tyrosine kinase activity"/>
    <property type="evidence" value="ECO:0000266"/>
    <property type="project" value="RGD"/>
</dbReference>
<dbReference type="GO" id="GO:0030331">
    <property type="term" value="F:nuclear estrogen receptor binding"/>
    <property type="evidence" value="ECO:0000353"/>
    <property type="project" value="RGD"/>
</dbReference>
<dbReference type="GO" id="GO:0016004">
    <property type="term" value="F:phospholipase activator activity"/>
    <property type="evidence" value="ECO:0000266"/>
    <property type="project" value="RGD"/>
</dbReference>
<dbReference type="GO" id="GO:0043274">
    <property type="term" value="F:phospholipase binding"/>
    <property type="evidence" value="ECO:0000266"/>
    <property type="project" value="RGD"/>
</dbReference>
<dbReference type="GO" id="GO:0051219">
    <property type="term" value="F:phosphoprotein binding"/>
    <property type="evidence" value="ECO:0000266"/>
    <property type="project" value="RGD"/>
</dbReference>
<dbReference type="GO" id="GO:0019904">
    <property type="term" value="F:protein domain specific binding"/>
    <property type="evidence" value="ECO:0000266"/>
    <property type="project" value="RGD"/>
</dbReference>
<dbReference type="GO" id="GO:0004672">
    <property type="term" value="F:protein kinase activity"/>
    <property type="evidence" value="ECO:0000266"/>
    <property type="project" value="RGD"/>
</dbReference>
<dbReference type="GO" id="GO:0019901">
    <property type="term" value="F:protein kinase binding"/>
    <property type="evidence" value="ECO:0000353"/>
    <property type="project" value="RGD"/>
</dbReference>
<dbReference type="GO" id="GO:0005080">
    <property type="term" value="F:protein kinase C binding"/>
    <property type="evidence" value="ECO:0000353"/>
    <property type="project" value="RGD"/>
</dbReference>
<dbReference type="GO" id="GO:0004713">
    <property type="term" value="F:protein tyrosine kinase activity"/>
    <property type="evidence" value="ECO:0000314"/>
    <property type="project" value="UniProtKB"/>
</dbReference>
<dbReference type="GO" id="GO:0044877">
    <property type="term" value="F:protein-containing complex binding"/>
    <property type="evidence" value="ECO:0000353"/>
    <property type="project" value="RGD"/>
</dbReference>
<dbReference type="GO" id="GO:0097110">
    <property type="term" value="F:scaffold protein binding"/>
    <property type="evidence" value="ECO:0000266"/>
    <property type="project" value="RGD"/>
</dbReference>
<dbReference type="GO" id="GO:0042169">
    <property type="term" value="F:SH2 domain binding"/>
    <property type="evidence" value="ECO:0000266"/>
    <property type="project" value="RGD"/>
</dbReference>
<dbReference type="GO" id="GO:0030546">
    <property type="term" value="F:signaling receptor activator activity"/>
    <property type="evidence" value="ECO:0000314"/>
    <property type="project" value="Alzheimers_University_of_Toronto"/>
</dbReference>
<dbReference type="GO" id="GO:0005102">
    <property type="term" value="F:signaling receptor binding"/>
    <property type="evidence" value="ECO:0000353"/>
    <property type="project" value="RGD"/>
</dbReference>
<dbReference type="GO" id="GO:0044325">
    <property type="term" value="F:transmembrane transporter binding"/>
    <property type="evidence" value="ECO:0000353"/>
    <property type="project" value="RGD"/>
</dbReference>
<dbReference type="GO" id="GO:0034332">
    <property type="term" value="P:adherens junction organization"/>
    <property type="evidence" value="ECO:0000270"/>
    <property type="project" value="RGD"/>
</dbReference>
<dbReference type="GO" id="GO:0038166">
    <property type="term" value="P:angiotensin-activated signaling pathway"/>
    <property type="evidence" value="ECO:0000266"/>
    <property type="project" value="RGD"/>
</dbReference>
<dbReference type="GO" id="GO:0048148">
    <property type="term" value="P:behavioral response to cocaine"/>
    <property type="evidence" value="ECO:0000270"/>
    <property type="project" value="RGD"/>
</dbReference>
<dbReference type="GO" id="GO:0045453">
    <property type="term" value="P:bone resorption"/>
    <property type="evidence" value="ECO:0000250"/>
    <property type="project" value="UniProtKB"/>
</dbReference>
<dbReference type="GO" id="GO:0060444">
    <property type="term" value="P:branching involved in mammary gland duct morphogenesis"/>
    <property type="evidence" value="ECO:0000266"/>
    <property type="project" value="RGD"/>
</dbReference>
<dbReference type="GO" id="GO:0007155">
    <property type="term" value="P:cell adhesion"/>
    <property type="evidence" value="ECO:0000318"/>
    <property type="project" value="GO_Central"/>
</dbReference>
<dbReference type="GO" id="GO:0030154">
    <property type="term" value="P:cell differentiation"/>
    <property type="evidence" value="ECO:0000318"/>
    <property type="project" value="GO_Central"/>
</dbReference>
<dbReference type="GO" id="GO:0016477">
    <property type="term" value="P:cell migration"/>
    <property type="evidence" value="ECO:0000266"/>
    <property type="project" value="RGD"/>
</dbReference>
<dbReference type="GO" id="GO:0098609">
    <property type="term" value="P:cell-cell adhesion"/>
    <property type="evidence" value="ECO:0000270"/>
    <property type="project" value="RGD"/>
</dbReference>
<dbReference type="GO" id="GO:1904385">
    <property type="term" value="P:cellular response to angiotensin"/>
    <property type="evidence" value="ECO:0000270"/>
    <property type="project" value="RGD"/>
</dbReference>
<dbReference type="GO" id="GO:0071398">
    <property type="term" value="P:cellular response to fatty acid"/>
    <property type="evidence" value="ECO:0000270"/>
    <property type="project" value="RGD"/>
</dbReference>
<dbReference type="GO" id="GO:0071498">
    <property type="term" value="P:cellular response to fluid shear stress"/>
    <property type="evidence" value="ECO:0000266"/>
    <property type="project" value="RGD"/>
</dbReference>
<dbReference type="GO" id="GO:0070301">
    <property type="term" value="P:cellular response to hydrogen peroxide"/>
    <property type="evidence" value="ECO:0000270"/>
    <property type="project" value="RGD"/>
</dbReference>
<dbReference type="GO" id="GO:0071456">
    <property type="term" value="P:cellular response to hypoxia"/>
    <property type="evidence" value="ECO:0000270"/>
    <property type="project" value="RGD"/>
</dbReference>
<dbReference type="GO" id="GO:0032869">
    <property type="term" value="P:cellular response to insulin stimulus"/>
    <property type="evidence" value="ECO:0000270"/>
    <property type="project" value="RGD"/>
</dbReference>
<dbReference type="GO" id="GO:0071222">
    <property type="term" value="P:cellular response to lipopolysaccharide"/>
    <property type="evidence" value="ECO:0000270"/>
    <property type="project" value="RGD"/>
</dbReference>
<dbReference type="GO" id="GO:0071375">
    <property type="term" value="P:cellular response to peptide hormone stimulus"/>
    <property type="evidence" value="ECO:0000266"/>
    <property type="project" value="RGD"/>
</dbReference>
<dbReference type="GO" id="GO:0036120">
    <property type="term" value="P:cellular response to platelet-derived growth factor stimulus"/>
    <property type="evidence" value="ECO:0000270"/>
    <property type="project" value="RGD"/>
</dbReference>
<dbReference type="GO" id="GO:0071393">
    <property type="term" value="P:cellular response to progesterone stimulus"/>
    <property type="evidence" value="ECO:0000315"/>
    <property type="project" value="BHF-UCL"/>
</dbReference>
<dbReference type="GO" id="GO:1990646">
    <property type="term" value="P:cellular response to prolactin"/>
    <property type="evidence" value="ECO:0000270"/>
    <property type="project" value="RGD"/>
</dbReference>
<dbReference type="GO" id="GO:0034614">
    <property type="term" value="P:cellular response to reactive oxygen species"/>
    <property type="evidence" value="ECO:0000250"/>
    <property type="project" value="UniProtKB"/>
</dbReference>
<dbReference type="GO" id="GO:0071560">
    <property type="term" value="P:cellular response to transforming growth factor beta stimulus"/>
    <property type="evidence" value="ECO:0000266"/>
    <property type="project" value="RGD"/>
</dbReference>
<dbReference type="GO" id="GO:0071897">
    <property type="term" value="P:DNA biosynthetic process"/>
    <property type="evidence" value="ECO:0000315"/>
    <property type="project" value="RGD"/>
</dbReference>
<dbReference type="GO" id="GO:0007173">
    <property type="term" value="P:epidermal growth factor receptor signaling pathway"/>
    <property type="evidence" value="ECO:0000270"/>
    <property type="project" value="RGD"/>
</dbReference>
<dbReference type="GO" id="GO:0048041">
    <property type="term" value="P:focal adhesion assembly"/>
    <property type="evidence" value="ECO:0000266"/>
    <property type="project" value="RGD"/>
</dbReference>
<dbReference type="GO" id="GO:0030900">
    <property type="term" value="P:forebrain development"/>
    <property type="evidence" value="ECO:0000266"/>
    <property type="project" value="RGD"/>
</dbReference>
<dbReference type="GO" id="GO:0002376">
    <property type="term" value="P:immune system process"/>
    <property type="evidence" value="ECO:0007669"/>
    <property type="project" value="UniProtKB-KW"/>
</dbReference>
<dbReference type="GO" id="GO:0007229">
    <property type="term" value="P:integrin-mediated signaling pathway"/>
    <property type="evidence" value="ECO:0000266"/>
    <property type="project" value="RGD"/>
</dbReference>
<dbReference type="GO" id="GO:0070102">
    <property type="term" value="P:interleukin-6-mediated signaling pathway"/>
    <property type="evidence" value="ECO:0000266"/>
    <property type="project" value="RGD"/>
</dbReference>
<dbReference type="GO" id="GO:0060576">
    <property type="term" value="P:intestinal epithelial cell development"/>
    <property type="evidence" value="ECO:0000266"/>
    <property type="project" value="RGD"/>
</dbReference>
<dbReference type="GO" id="GO:0035556">
    <property type="term" value="P:intracellular signal transduction"/>
    <property type="evidence" value="ECO:0000266"/>
    <property type="project" value="RGD"/>
</dbReference>
<dbReference type="GO" id="GO:0007611">
    <property type="term" value="P:learning or memory"/>
    <property type="evidence" value="ECO:0000270"/>
    <property type="project" value="RGD"/>
</dbReference>
<dbReference type="GO" id="GO:0051450">
    <property type="term" value="P:myoblast proliferation"/>
    <property type="evidence" value="ECO:0000270"/>
    <property type="project" value="RGD"/>
</dbReference>
<dbReference type="GO" id="GO:2000811">
    <property type="term" value="P:negative regulation of anoikis"/>
    <property type="evidence" value="ECO:0000266"/>
    <property type="project" value="RGD"/>
</dbReference>
<dbReference type="GO" id="GO:0043066">
    <property type="term" value="P:negative regulation of apoptotic process"/>
    <property type="evidence" value="ECO:0000266"/>
    <property type="project" value="RGD"/>
</dbReference>
<dbReference type="GO" id="GO:2001237">
    <property type="term" value="P:negative regulation of extrinsic apoptotic signaling pathway"/>
    <property type="evidence" value="ECO:0000266"/>
    <property type="project" value="RGD"/>
</dbReference>
<dbReference type="GO" id="GO:0051895">
    <property type="term" value="P:negative regulation of focal adhesion assembly"/>
    <property type="evidence" value="ECO:0000315"/>
    <property type="project" value="BHF-UCL"/>
</dbReference>
<dbReference type="GO" id="GO:0010629">
    <property type="term" value="P:negative regulation of gene expression"/>
    <property type="evidence" value="ECO:0000315"/>
    <property type="project" value="UniProtKB"/>
</dbReference>
<dbReference type="GO" id="GO:0035331">
    <property type="term" value="P:negative regulation of hippo signaling"/>
    <property type="evidence" value="ECO:0000266"/>
    <property type="project" value="RGD"/>
</dbReference>
<dbReference type="GO" id="GO:2001243">
    <property type="term" value="P:negative regulation of intrinsic apoptotic signaling pathway"/>
    <property type="evidence" value="ECO:0000266"/>
    <property type="project" value="RGD"/>
</dbReference>
<dbReference type="GO" id="GO:0051902">
    <property type="term" value="P:negative regulation of mitochondrial depolarization"/>
    <property type="evidence" value="ECO:0000266"/>
    <property type="project" value="RGD"/>
</dbReference>
<dbReference type="GO" id="GO:1902564">
    <property type="term" value="P:negative regulation of neutrophil activation"/>
    <property type="evidence" value="ECO:0000266"/>
    <property type="project" value="RGD"/>
</dbReference>
<dbReference type="GO" id="GO:0031333">
    <property type="term" value="P:negative regulation of protein-containing complex assembly"/>
    <property type="evidence" value="ECO:0000266"/>
    <property type="project" value="RGD"/>
</dbReference>
<dbReference type="GO" id="GO:0032205">
    <property type="term" value="P:negative regulation of telomere maintenance"/>
    <property type="evidence" value="ECO:0000266"/>
    <property type="project" value="RGD"/>
</dbReference>
<dbReference type="GO" id="GO:0000122">
    <property type="term" value="P:negative regulation of transcription by RNA polymerase II"/>
    <property type="evidence" value="ECO:0000266"/>
    <property type="project" value="RGD"/>
</dbReference>
<dbReference type="GO" id="GO:0048011">
    <property type="term" value="P:neurotrophin TRK receptor signaling pathway"/>
    <property type="evidence" value="ECO:0000314"/>
    <property type="project" value="RGD"/>
</dbReference>
<dbReference type="GO" id="GO:0042476">
    <property type="term" value="P:odontogenesis"/>
    <property type="evidence" value="ECO:0000266"/>
    <property type="project" value="RGD"/>
</dbReference>
<dbReference type="GO" id="GO:0048477">
    <property type="term" value="P:oogenesis"/>
    <property type="evidence" value="ECO:0000266"/>
    <property type="project" value="RGD"/>
</dbReference>
<dbReference type="GO" id="GO:0036035">
    <property type="term" value="P:osteoclast development"/>
    <property type="evidence" value="ECO:0000266"/>
    <property type="project" value="RGD"/>
</dbReference>
<dbReference type="GO" id="GO:0038083">
    <property type="term" value="P:peptidyl-tyrosine autophosphorylation"/>
    <property type="evidence" value="ECO:0000315"/>
    <property type="project" value="CACAO"/>
</dbReference>
<dbReference type="GO" id="GO:0048008">
    <property type="term" value="P:platelet-derived growth factor receptor signaling pathway"/>
    <property type="evidence" value="ECO:0000270"/>
    <property type="project" value="UniProtKB"/>
</dbReference>
<dbReference type="GO" id="GO:0043065">
    <property type="term" value="P:positive regulation of apoptotic process"/>
    <property type="evidence" value="ECO:0000314"/>
    <property type="project" value="RGD"/>
</dbReference>
<dbReference type="GO" id="GO:0045780">
    <property type="term" value="P:positive regulation of bone resorption"/>
    <property type="evidence" value="ECO:0000315"/>
    <property type="project" value="RGD"/>
</dbReference>
<dbReference type="GO" id="GO:0090263">
    <property type="term" value="P:positive regulation of canonical Wnt signaling pathway"/>
    <property type="evidence" value="ECO:0000266"/>
    <property type="project" value="RGD"/>
</dbReference>
<dbReference type="GO" id="GO:0045785">
    <property type="term" value="P:positive regulation of cell adhesion"/>
    <property type="evidence" value="ECO:0000314"/>
    <property type="project" value="RGD"/>
</dbReference>
<dbReference type="GO" id="GO:0008284">
    <property type="term" value="P:positive regulation of cell population proliferation"/>
    <property type="evidence" value="ECO:0000315"/>
    <property type="project" value="UniProtKB"/>
</dbReference>
<dbReference type="GO" id="GO:0001819">
    <property type="term" value="P:positive regulation of cytokine production"/>
    <property type="evidence" value="ECO:0000315"/>
    <property type="project" value="RGD"/>
</dbReference>
<dbReference type="GO" id="GO:0035306">
    <property type="term" value="P:positive regulation of dephosphorylation"/>
    <property type="evidence" value="ECO:0000266"/>
    <property type="project" value="RGD"/>
</dbReference>
<dbReference type="GO" id="GO:0010634">
    <property type="term" value="P:positive regulation of epithelial cell migration"/>
    <property type="evidence" value="ECO:0000266"/>
    <property type="project" value="RGD"/>
</dbReference>
<dbReference type="GO" id="GO:0070374">
    <property type="term" value="P:positive regulation of ERK1 and ERK2 cascade"/>
    <property type="evidence" value="ECO:0000315"/>
    <property type="project" value="UniProtKB"/>
</dbReference>
<dbReference type="GO" id="GO:0010628">
    <property type="term" value="P:positive regulation of gene expression"/>
    <property type="evidence" value="ECO:0000315"/>
    <property type="project" value="UniProtKB"/>
</dbReference>
<dbReference type="GO" id="GO:0010907">
    <property type="term" value="P:positive regulation of glucose metabolic process"/>
    <property type="evidence" value="ECO:0000315"/>
    <property type="project" value="RGD"/>
</dbReference>
<dbReference type="GO" id="GO:0045821">
    <property type="term" value="P:positive regulation of glycolytic process"/>
    <property type="evidence" value="ECO:0000266"/>
    <property type="project" value="RGD"/>
</dbReference>
<dbReference type="GO" id="GO:0046628">
    <property type="term" value="P:positive regulation of insulin receptor signaling pathway"/>
    <property type="evidence" value="ECO:0000314"/>
    <property type="project" value="RGD"/>
</dbReference>
<dbReference type="GO" id="GO:1902533">
    <property type="term" value="P:positive regulation of intracellular signal transduction"/>
    <property type="evidence" value="ECO:0000315"/>
    <property type="project" value="RGD"/>
</dbReference>
<dbReference type="GO" id="GO:2000394">
    <property type="term" value="P:positive regulation of lamellipodium morphogenesis"/>
    <property type="evidence" value="ECO:0000266"/>
    <property type="project" value="RGD"/>
</dbReference>
<dbReference type="GO" id="GO:2000256">
    <property type="term" value="P:positive regulation of male germ cell proliferation"/>
    <property type="evidence" value="ECO:0000315"/>
    <property type="project" value="RGD"/>
</dbReference>
<dbReference type="GO" id="GO:2000179">
    <property type="term" value="P:positive regulation of neural precursor cell proliferation"/>
    <property type="evidence" value="ECO:0000315"/>
    <property type="project" value="RGD"/>
</dbReference>
<dbReference type="GO" id="GO:0045747">
    <property type="term" value="P:positive regulation of Notch signaling pathway"/>
    <property type="evidence" value="ECO:0000266"/>
    <property type="project" value="RGD"/>
</dbReference>
<dbReference type="GO" id="GO:0051897">
    <property type="term" value="P:positive regulation of phosphatidylinositol 3-kinase/protein kinase B signal transduction"/>
    <property type="evidence" value="ECO:0000315"/>
    <property type="project" value="UniProtKB"/>
</dbReference>
<dbReference type="GO" id="GO:2000588">
    <property type="term" value="P:positive regulation of platelet-derived growth factor receptor-beta signaling pathway"/>
    <property type="evidence" value="ECO:0000266"/>
    <property type="project" value="RGD"/>
</dbReference>
<dbReference type="GO" id="GO:0071803">
    <property type="term" value="P:positive regulation of podosome assembly"/>
    <property type="evidence" value="ECO:0000266"/>
    <property type="project" value="RGD"/>
</dbReference>
<dbReference type="GO" id="GO:1900182">
    <property type="term" value="P:positive regulation of protein localization to nucleus"/>
    <property type="evidence" value="ECO:0000266"/>
    <property type="project" value="RGD"/>
</dbReference>
<dbReference type="GO" id="GO:0010954">
    <property type="term" value="P:positive regulation of protein processing"/>
    <property type="evidence" value="ECO:0000266"/>
    <property type="project" value="RGD"/>
</dbReference>
<dbReference type="GO" id="GO:0051222">
    <property type="term" value="P:positive regulation of protein transport"/>
    <property type="evidence" value="ECO:0000315"/>
    <property type="project" value="RGD"/>
</dbReference>
<dbReference type="GO" id="GO:0046579">
    <property type="term" value="P:positive regulation of Ras protein signal transduction"/>
    <property type="evidence" value="ECO:0000315"/>
    <property type="project" value="RGD"/>
</dbReference>
<dbReference type="GO" id="GO:0051057">
    <property type="term" value="P:positive regulation of small GTPase mediated signal transduction"/>
    <property type="evidence" value="ECO:0000266"/>
    <property type="project" value="RGD"/>
</dbReference>
<dbReference type="GO" id="GO:0014911">
    <property type="term" value="P:positive regulation of smooth muscle cell migration"/>
    <property type="evidence" value="ECO:0000315"/>
    <property type="project" value="RGD"/>
</dbReference>
<dbReference type="GO" id="GO:1904263">
    <property type="term" value="P:positive regulation of TORC1 signaling"/>
    <property type="evidence" value="ECO:0000266"/>
    <property type="project" value="RGD"/>
</dbReference>
<dbReference type="GO" id="GO:1904707">
    <property type="term" value="P:positive regulation of vascular associated smooth muscle cell proliferation"/>
    <property type="evidence" value="ECO:0000315"/>
    <property type="project" value="RGD"/>
</dbReference>
<dbReference type="GO" id="GO:0050847">
    <property type="term" value="P:progesterone receptor signaling pathway"/>
    <property type="evidence" value="ECO:0000315"/>
    <property type="project" value="BHF-UCL"/>
</dbReference>
<dbReference type="GO" id="GO:0031648">
    <property type="term" value="P:protein destabilization"/>
    <property type="evidence" value="ECO:0000266"/>
    <property type="project" value="RGD"/>
</dbReference>
<dbReference type="GO" id="GO:2001286">
    <property type="term" value="P:regulation of caveolin-mediated endocytosis"/>
    <property type="evidence" value="ECO:0000266"/>
    <property type="project" value="RGD"/>
</dbReference>
<dbReference type="GO" id="GO:0060491">
    <property type="term" value="P:regulation of cell projection assembly"/>
    <property type="evidence" value="ECO:0000266"/>
    <property type="project" value="RGD"/>
</dbReference>
<dbReference type="GO" id="GO:0022407">
    <property type="term" value="P:regulation of cell-cell adhesion"/>
    <property type="evidence" value="ECO:0000266"/>
    <property type="project" value="RGD"/>
</dbReference>
<dbReference type="GO" id="GO:2000641">
    <property type="term" value="P:regulation of early endosome to late endosome transport"/>
    <property type="evidence" value="ECO:0000266"/>
    <property type="project" value="RGD"/>
</dbReference>
<dbReference type="GO" id="GO:0010632">
    <property type="term" value="P:regulation of epithelial cell migration"/>
    <property type="evidence" value="ECO:0000266"/>
    <property type="project" value="RGD"/>
</dbReference>
<dbReference type="GO" id="GO:0086091">
    <property type="term" value="P:regulation of heart rate by cardiac conduction"/>
    <property type="evidence" value="ECO:0000266"/>
    <property type="project" value="RGD"/>
</dbReference>
<dbReference type="GO" id="GO:0033146">
    <property type="term" value="P:regulation of intracellular estrogen receptor signaling pathway"/>
    <property type="evidence" value="ECO:0000266"/>
    <property type="project" value="RGD"/>
</dbReference>
<dbReference type="GO" id="GO:0034139">
    <property type="term" value="P:regulation of toll-like receptor 3 signaling pathway"/>
    <property type="evidence" value="ECO:0000266"/>
    <property type="project" value="RGD"/>
</dbReference>
<dbReference type="GO" id="GO:0010447">
    <property type="term" value="P:response to acidic pH"/>
    <property type="evidence" value="ECO:0000270"/>
    <property type="project" value="RGD"/>
</dbReference>
<dbReference type="GO" id="GO:0051602">
    <property type="term" value="P:response to electrical stimulus"/>
    <property type="evidence" value="ECO:0000270"/>
    <property type="project" value="RGD"/>
</dbReference>
<dbReference type="GO" id="GO:0070542">
    <property type="term" value="P:response to fatty acid"/>
    <property type="evidence" value="ECO:0000270"/>
    <property type="project" value="RGD"/>
</dbReference>
<dbReference type="GO" id="GO:0042542">
    <property type="term" value="P:response to hydrogen peroxide"/>
    <property type="evidence" value="ECO:0000270"/>
    <property type="project" value="RGD"/>
</dbReference>
<dbReference type="GO" id="GO:0070555">
    <property type="term" value="P:response to interleukin-1"/>
    <property type="evidence" value="ECO:0000266"/>
    <property type="project" value="RGD"/>
</dbReference>
<dbReference type="GO" id="GO:0009612">
    <property type="term" value="P:response to mechanical stimulus"/>
    <property type="evidence" value="ECO:0000270"/>
    <property type="project" value="RGD"/>
</dbReference>
<dbReference type="GO" id="GO:0051385">
    <property type="term" value="P:response to mineralocorticoid"/>
    <property type="evidence" value="ECO:0000270"/>
    <property type="project" value="RGD"/>
</dbReference>
<dbReference type="GO" id="GO:0031667">
    <property type="term" value="P:response to nutrient levels"/>
    <property type="evidence" value="ECO:0000270"/>
    <property type="project" value="RGD"/>
</dbReference>
<dbReference type="GO" id="GO:0009410">
    <property type="term" value="P:response to xenobiotic stimulus"/>
    <property type="evidence" value="ECO:0000270"/>
    <property type="project" value="RGD"/>
</dbReference>
<dbReference type="GO" id="GO:0014856">
    <property type="term" value="P:skeletal muscle cell proliferation"/>
    <property type="evidence" value="ECO:0000270"/>
    <property type="project" value="RGD"/>
</dbReference>
<dbReference type="GO" id="GO:0007283">
    <property type="term" value="P:spermatogenesis"/>
    <property type="evidence" value="ECO:0000270"/>
    <property type="project" value="RGD"/>
</dbReference>
<dbReference type="GO" id="GO:0043149">
    <property type="term" value="P:stress fiber assembly"/>
    <property type="evidence" value="ECO:0000266"/>
    <property type="project" value="RGD"/>
</dbReference>
<dbReference type="GO" id="GO:0034446">
    <property type="term" value="P:substrate adhesion-dependent cell spreading"/>
    <property type="evidence" value="ECO:0000266"/>
    <property type="project" value="RGD"/>
</dbReference>
<dbReference type="GO" id="GO:0045056">
    <property type="term" value="P:transcytosis"/>
    <property type="evidence" value="ECO:0000314"/>
    <property type="project" value="RGD"/>
</dbReference>
<dbReference type="GO" id="GO:0007179">
    <property type="term" value="P:transforming growth factor beta receptor signaling pathway"/>
    <property type="evidence" value="ECO:0000266"/>
    <property type="project" value="RGD"/>
</dbReference>
<dbReference type="GO" id="GO:0060065">
    <property type="term" value="P:uterus development"/>
    <property type="evidence" value="ECO:0000266"/>
    <property type="project" value="RGD"/>
</dbReference>
<dbReference type="GO" id="GO:0042311">
    <property type="term" value="P:vasodilation"/>
    <property type="evidence" value="ECO:0000266"/>
    <property type="project" value="RGD"/>
</dbReference>
<dbReference type="CDD" id="cd05071">
    <property type="entry name" value="PTKc_Src"/>
    <property type="match status" value="1"/>
</dbReference>
<dbReference type="CDD" id="cd10365">
    <property type="entry name" value="SH2_Src_Src"/>
    <property type="match status" value="1"/>
</dbReference>
<dbReference type="CDD" id="cd12008">
    <property type="entry name" value="SH3_Src"/>
    <property type="match status" value="1"/>
</dbReference>
<dbReference type="FunFam" id="1.10.510.10:FF:000553">
    <property type="entry name" value="Tyrosine-protein kinase"/>
    <property type="match status" value="1"/>
</dbReference>
<dbReference type="FunFam" id="2.30.30.40:FF:000083">
    <property type="entry name" value="Tyrosine-protein kinase"/>
    <property type="match status" value="1"/>
</dbReference>
<dbReference type="FunFam" id="3.30.200.20:FF:000016">
    <property type="entry name" value="Tyrosine-protein kinase"/>
    <property type="match status" value="1"/>
</dbReference>
<dbReference type="FunFam" id="3.30.505.10:FF:000001">
    <property type="entry name" value="Tyrosine-protein kinase"/>
    <property type="match status" value="1"/>
</dbReference>
<dbReference type="Gene3D" id="3.30.200.20">
    <property type="entry name" value="Phosphorylase Kinase, domain 1"/>
    <property type="match status" value="1"/>
</dbReference>
<dbReference type="Gene3D" id="3.30.505.10">
    <property type="entry name" value="SH2 domain"/>
    <property type="match status" value="1"/>
</dbReference>
<dbReference type="Gene3D" id="2.30.30.40">
    <property type="entry name" value="SH3 Domains"/>
    <property type="match status" value="1"/>
</dbReference>
<dbReference type="Gene3D" id="1.10.510.10">
    <property type="entry name" value="Transferase(Phosphotransferase) domain 1"/>
    <property type="match status" value="1"/>
</dbReference>
<dbReference type="InterPro" id="IPR011009">
    <property type="entry name" value="Kinase-like_dom_sf"/>
</dbReference>
<dbReference type="InterPro" id="IPR050198">
    <property type="entry name" value="Non-receptor_tyrosine_kinases"/>
</dbReference>
<dbReference type="InterPro" id="IPR000719">
    <property type="entry name" value="Prot_kinase_dom"/>
</dbReference>
<dbReference type="InterPro" id="IPR017441">
    <property type="entry name" value="Protein_kinase_ATP_BS"/>
</dbReference>
<dbReference type="InterPro" id="IPR001245">
    <property type="entry name" value="Ser-Thr/Tyr_kinase_cat_dom"/>
</dbReference>
<dbReference type="InterPro" id="IPR000980">
    <property type="entry name" value="SH2"/>
</dbReference>
<dbReference type="InterPro" id="IPR036860">
    <property type="entry name" value="SH2_dom_sf"/>
</dbReference>
<dbReference type="InterPro" id="IPR036028">
    <property type="entry name" value="SH3-like_dom_sf"/>
</dbReference>
<dbReference type="InterPro" id="IPR001452">
    <property type="entry name" value="SH3_domain"/>
</dbReference>
<dbReference type="InterPro" id="IPR008266">
    <property type="entry name" value="Tyr_kinase_AS"/>
</dbReference>
<dbReference type="InterPro" id="IPR020635">
    <property type="entry name" value="Tyr_kinase_cat_dom"/>
</dbReference>
<dbReference type="PANTHER" id="PTHR24418">
    <property type="entry name" value="TYROSINE-PROTEIN KINASE"/>
    <property type="match status" value="1"/>
</dbReference>
<dbReference type="Pfam" id="PF07714">
    <property type="entry name" value="PK_Tyr_Ser-Thr"/>
    <property type="match status" value="1"/>
</dbReference>
<dbReference type="Pfam" id="PF00017">
    <property type="entry name" value="SH2"/>
    <property type="match status" value="1"/>
</dbReference>
<dbReference type="Pfam" id="PF00018">
    <property type="entry name" value="SH3_1"/>
    <property type="match status" value="1"/>
</dbReference>
<dbReference type="PRINTS" id="PR00401">
    <property type="entry name" value="SH2DOMAIN"/>
</dbReference>
<dbReference type="PRINTS" id="PR00452">
    <property type="entry name" value="SH3DOMAIN"/>
</dbReference>
<dbReference type="PRINTS" id="PR00109">
    <property type="entry name" value="TYRKINASE"/>
</dbReference>
<dbReference type="SMART" id="SM00252">
    <property type="entry name" value="SH2"/>
    <property type="match status" value="1"/>
</dbReference>
<dbReference type="SMART" id="SM00326">
    <property type="entry name" value="SH3"/>
    <property type="match status" value="1"/>
</dbReference>
<dbReference type="SMART" id="SM00219">
    <property type="entry name" value="TyrKc"/>
    <property type="match status" value="1"/>
</dbReference>
<dbReference type="SUPFAM" id="SSF56112">
    <property type="entry name" value="Protein kinase-like (PK-like)"/>
    <property type="match status" value="1"/>
</dbReference>
<dbReference type="SUPFAM" id="SSF55550">
    <property type="entry name" value="SH2 domain"/>
    <property type="match status" value="1"/>
</dbReference>
<dbReference type="SUPFAM" id="SSF50044">
    <property type="entry name" value="SH3-domain"/>
    <property type="match status" value="1"/>
</dbReference>
<dbReference type="PROSITE" id="PS00107">
    <property type="entry name" value="PROTEIN_KINASE_ATP"/>
    <property type="match status" value="1"/>
</dbReference>
<dbReference type="PROSITE" id="PS50011">
    <property type="entry name" value="PROTEIN_KINASE_DOM"/>
    <property type="match status" value="1"/>
</dbReference>
<dbReference type="PROSITE" id="PS00109">
    <property type="entry name" value="PROTEIN_KINASE_TYR"/>
    <property type="match status" value="1"/>
</dbReference>
<dbReference type="PROSITE" id="PS50001">
    <property type="entry name" value="SH2"/>
    <property type="match status" value="1"/>
</dbReference>
<dbReference type="PROSITE" id="PS50002">
    <property type="entry name" value="SH3"/>
    <property type="match status" value="1"/>
</dbReference>
<protein>
    <recommendedName>
        <fullName>Proto-oncogene tyrosine-protein kinase Src</fullName>
        <ecNumber evidence="16 17 18">2.7.10.2</ecNumber>
    </recommendedName>
    <alternativeName>
        <fullName>Proto-oncogene c-Src</fullName>
    </alternativeName>
    <alternativeName>
        <fullName>pp60c-src</fullName>
        <shortName>p60-Src</shortName>
    </alternativeName>
</protein>
<sequence>MGSNKSKPKDASQRRRSLEPAENVHGAGGAFPASQTPSKPASADGHRGPNAAFVPPAAAEPKLFGGFNSSDTVTSPQRAGPLAGGVTTFVALYDYESRTETDLSFKKGERLQIVNNTEGDWWLAHSLSTGQTGYIPSNYVAPSDSIQAEEWYFGKITRRESERLLLNAENPRGTFLVRESETTKGAYCLSVSDFDNAKGLNVKHYKIRKLDSGGFYITSRTQFNSLQQLVAYYSKHADGLCHRLTTVCPTSKPQTQGLAKDAWEIPRESLRLEVKLGQGCFGEVWMGTWNGTTRVAIKTLKPGTMSPEAFLQEAQVMKKLRHEKLVQLYAVVSEEPIYIVTEYMNKGSLLDFLKGETGKYLRLPQLVDMSAQIASGMAYVERMNYVHRDLRAANILVGENLVCKVADFGLARLIEDNEYTARQGAKFPIKWTAPEAALYGRFTIKSDVWSFGILLTELTTKGRVPYPGMVNREVLDQVERGYRMPCPPECPESLHDLMCQCWRKEPEERPTFEYLQAFLEDYFTSTEPQYQPGENL</sequence>
<feature type="initiator methionine" description="Removed" evidence="3">
    <location>
        <position position="1"/>
    </location>
</feature>
<feature type="chain" id="PRO_0000088143" description="Proto-oncogene tyrosine-protein kinase Src">
    <location>
        <begin position="2"/>
        <end position="536"/>
    </location>
</feature>
<feature type="domain" description="SH3" evidence="6">
    <location>
        <begin position="84"/>
        <end position="145"/>
    </location>
</feature>
<feature type="domain" description="SH2" evidence="5">
    <location>
        <begin position="151"/>
        <end position="248"/>
    </location>
</feature>
<feature type="domain" description="Protein kinase" evidence="4">
    <location>
        <begin position="270"/>
        <end position="523"/>
    </location>
</feature>
<feature type="region of interest" description="Disordered" evidence="8">
    <location>
        <begin position="1"/>
        <end position="49"/>
    </location>
</feature>
<feature type="compositionally biased region" description="Basic and acidic residues" evidence="8">
    <location>
        <begin position="7"/>
        <end position="19"/>
    </location>
</feature>
<feature type="active site" description="Proton acceptor" evidence="4 7">
    <location>
        <position position="389"/>
    </location>
</feature>
<feature type="binding site" evidence="4">
    <location>
        <begin position="276"/>
        <end position="284"/>
    </location>
    <ligand>
        <name>ATP</name>
        <dbReference type="ChEBI" id="CHEBI:30616"/>
    </ligand>
</feature>
<feature type="binding site" evidence="4">
    <location>
        <position position="298"/>
    </location>
    <ligand>
        <name>ATP</name>
        <dbReference type="ChEBI" id="CHEBI:30616"/>
    </ligand>
</feature>
<feature type="modified residue" description="Phosphoserine" evidence="22">
    <location>
        <position position="17"/>
    </location>
</feature>
<feature type="modified residue" description="Phosphoserine; by CDK5" evidence="3">
    <location>
        <position position="75"/>
    </location>
</feature>
<feature type="modified residue" description="Phosphotyrosine" evidence="2">
    <location>
        <position position="187"/>
    </location>
</feature>
<feature type="modified residue" description="Phosphotyrosine; by autocatalysis" evidence="16">
    <location>
        <position position="419"/>
    </location>
</feature>
<feature type="modified residue" description="Phosphotyrosine; by FAK2" evidence="18">
    <location>
        <position position="419"/>
    </location>
</feature>
<feature type="modified residue" description="Phosphotyrosine; by CSK" evidence="16">
    <location>
        <position position="530"/>
    </location>
</feature>
<feature type="lipid moiety-binding region" description="N-myristoyl glycine" evidence="1">
    <location>
        <position position="2"/>
    </location>
</feature>
<feature type="splice variant" id="VSP_053395" description="In isoform 2." evidence="19">
    <original>T</original>
    <variation>TRKVDVR</variation>
    <location>
        <position position="117"/>
    </location>
</feature>
<feature type="splice variant" id="VSP_061495" description="In isoform 3.">
    <original>T</original>
    <variation>TRKVDVSQTWFTFRWLQR</variation>
    <location>
        <position position="117"/>
    </location>
</feature>
<feature type="sequence conflict" description="In Ref. 1; AAD24180 and 5; AAZ23849/AAZ23848." evidence="21" ref="1 5">
    <original>S</original>
    <variation>F</variation>
    <location>
        <position position="143"/>
    </location>
</feature>
<feature type="sequence conflict" description="In Ref. 1; AAD24180 and 5; AAZ23849/AAZ23848." evidence="21" ref="1 5">
    <original>E</original>
    <variation>D</variation>
    <location>
        <position position="381"/>
    </location>
</feature>
<feature type="sequence conflict" description="In Ref. 1; AAD24180 and 5; AAZ23849/AAZ23848." evidence="21" ref="1 5">
    <original>P</original>
    <variation>R</variation>
    <location>
        <position position="528"/>
    </location>
</feature>
<accession>Q9WUD9</accession>
<accession>G3V776</accession>
<accession>Q45QJ2</accession>
<accession>Q9JJ10</accession>
<comment type="function">
    <text evidence="2 3 14 16 21">Non-receptor protein tyrosine kinase which is activated following engagement of many different classes of cellular receptors including immune response receptors, integrins and other adhesion receptors, receptor protein tyrosine kinases, G protein-coupled receptors as well as cytokine receptors. Participates in signaling pathways that control a diverse spectrum of biological activities including gene transcription, immune response, cell adhesion, cell cycle progression, apoptosis, migration, and transformation. Due to functional redundancy between members of the SRC kinase family, identification of the specific role of each SRC kinase is very difficult. SRC appears to be one of the primary kinases activated following engagement of receptors and plays a role in the activation of other protein tyrosine kinase (PTK) families. Receptor clustering or dimerization leads to recruitment of SRC to the receptor complexes where it phosphorylates the tyrosine residues within the receptor cytoplasmic domains. Plays an important role in the regulation of cytoskeletal organization through phosphorylation of specific substrates such as AFAP1. Phosphorylation of AFAP1 allows the SRC SH2 domain to bind AFAP1 and to localize to actin filaments. Cytoskeletal reorganization is also controlled through the phosphorylation of cortactin (CTTN) (Probable). When cells adhere via focal adhesions to the extracellular matrix, signals are transmitted by integrins into the cell resulting in tyrosine phosphorylation of a number of focal adhesion proteins, including PTK2/FAK1 and paxillin (PXN) (By similarity). In addition to phosphorylating focal adhesion proteins, SRC is also active at the sites of cell-cell contact adherens junctions and phosphorylates substrates such as beta-catenin (CTNNB1), delta-catenin (CTNND1), and plakoglobin (JUP). Another type of cell-cell junction, the gap junction, is also a target for SRC, which phosphorylates connexin-43 (GJA1). SRC is implicated in regulation of pre-mRNA-processing and phosphorylates RNA-binding proteins such as KHDRBS1 (Probable). Phosphorylates PKP3 at 'Tyr-195' in response to reactive oxygen species, which may cause the release of PKP3 from desmosome cell junctions into the cytoplasm (By similarity). Also plays a role in PDGF-mediated tyrosine phosphorylation of both STAT1 and STAT3, leading to increased DNA binding activity of these transcription factors (By similarity). Involved in the RAS pathway through phosphorylation of RASA1 and RASGRF1. Plays a role in EGF-mediated calcium-activated chloride channel activation (By similarity). Required for epidermal growth factor receptor (EGFR) internalization through phosphorylation of clathrin heavy chain (CLTC and CLTCL1) at 'Tyr-1477'. Involved in beta-arrestin (ARRB1 and ARRB2) desensitization through phosphorylation and activation of GRK2, leading to beta-arrestin phosphorylation and internalization. Has a critical role in the stimulation of the CDK20/MAPK3 mitogen-activated protein kinase cascade by epidermal growth factor (Probable). Might be involved not only in mediating the transduction of mitogenic signals at the level of the plasma membrane but also in controlling progression through the cell cycle via interaction with regulatory proteins in the nucleus. Plays an important role in osteoclastic bone resorption in conjunction with PTK2B/PYK2. Both the formation of a SRC-PTK2B/PYK2 complex and SRC kinase activity are necessary for this function. Recruited to activated integrins by PTK2B/PYK2, thereby phosphorylating CBL, which in turn induces the activation and recruitment of phosphatidylinositol 3-kinase to the cell membrane in a signaling pathway that is critical for osteoclast function. Promotes energy production in osteoclasts by activating mitochondrial cytochrome C oxidase (By similarity). Phosphorylates DDR2 on tyrosine residues, thereby promoting its subsequent autophosphorylation (PubMed:16186108). Phosphorylates RUNX3 and COX2 on tyrosine residues, TNK2 on 'Tyr-284' and CBL on 'Tyr-738'. Enhances RIGI-elicited antiviral signaling. Phosphorylates PDPK1 at 'Tyr-9', 'Tyr-373' and 'Tyr-376'. Phosphorylates BCAR1 at 'Tyr-226'. Phosphorylates CBLC at multiple tyrosine residues, phosphorylation at 'Tyr-341' activates CBLC E3 activity. Phosphorylates synaptic vesicle protein synaptophysin (SYP) (PubMed:26026271). Involved in anchorage-independent cell growth (By similarity). Required for podosome formation (By similarity). Mediates IL6 signaling by activating YAP1-NOTCH pathway to induce inflammation-induced epithelial regeneration (By similarity). Phosphorylates OTUB1, promoting deubiquitination of RPTOR (By similarity).</text>
</comment>
<comment type="function">
    <molecule>Isoform 1</molecule>
    <text evidence="16">Non-receptor protein tyrosine kinase which phosphorylates synaptophysin with high affinity.</text>
</comment>
<comment type="function">
    <molecule>Isoform 2</molecule>
    <text evidence="16 17">Non-receptor protein tyrosine kinase which shows higher basal kinase activity than isoform 1, possibly due to weakened intramolecular interactions which enhance autophosphorylation of Tyr-419 and subsequent activation (PubMed:26026271). The SH3 domain shows reduced affinity with the linker sequence between the SH2 and kinase domains which may account for the increased basal activity (PubMed:26026271). Displays altered substrate specificity compared to isoform 1, showing weak affinity for synaptophysin and for peptide substrates containing class I or class II SH3 domain-binding motifs (PubMed:26026271). Plays a role in L1CAM-mediated neurite elongation, possibly by acting downstream of L1CAM to drive cytoskeletal rearrangements involved in neurite outgrowth (PubMed:28220894).</text>
</comment>
<comment type="function">
    <molecule>Isoform 3</molecule>
    <text evidence="16 17">Non-receptor protein tyrosine kinase which shows higher basal kinase activity than isoform 1, possibly due to weakened intramolecular interactions which enhance autophosphorylation of Tyr-419 and subsequent activation (PubMed:26026271). The SH3 domain shows reduced affinity with the linker sequence between the SH2 and kinase domains which may account for the increased basal activity (PubMed:26026271). Displays altered substrate specificity compared to isoform 1, showing weak affinity for synaptophysin and for peptide substrates containing class I or class II SH3 domain-binding motifs (PubMed:26026271). Plays a role in neurite elongation (PubMed:28220894).</text>
</comment>
<comment type="catalytic activity">
    <reaction evidence="7 18">
        <text>L-tyrosyl-[protein] + ATP = O-phospho-L-tyrosyl-[protein] + ADP + H(+)</text>
        <dbReference type="Rhea" id="RHEA:10596"/>
        <dbReference type="Rhea" id="RHEA-COMP:10136"/>
        <dbReference type="Rhea" id="RHEA-COMP:20101"/>
        <dbReference type="ChEBI" id="CHEBI:15378"/>
        <dbReference type="ChEBI" id="CHEBI:30616"/>
        <dbReference type="ChEBI" id="CHEBI:46858"/>
        <dbReference type="ChEBI" id="CHEBI:61978"/>
        <dbReference type="ChEBI" id="CHEBI:456216"/>
        <dbReference type="EC" id="2.7.10.2"/>
    </reaction>
</comment>
<comment type="catalytic activity">
    <molecule>Isoform 1</molecule>
    <reaction evidence="16 17">
        <text>L-tyrosyl-[protein] + ATP = O-phospho-L-tyrosyl-[protein] + ADP + H(+)</text>
        <dbReference type="Rhea" id="RHEA:10596"/>
        <dbReference type="Rhea" id="RHEA-COMP:10136"/>
        <dbReference type="Rhea" id="RHEA-COMP:20101"/>
        <dbReference type="ChEBI" id="CHEBI:15378"/>
        <dbReference type="ChEBI" id="CHEBI:30616"/>
        <dbReference type="ChEBI" id="CHEBI:46858"/>
        <dbReference type="ChEBI" id="CHEBI:61978"/>
        <dbReference type="ChEBI" id="CHEBI:456216"/>
        <dbReference type="EC" id="2.7.10.2"/>
    </reaction>
</comment>
<comment type="catalytic activity">
    <molecule>Isoform 2</molecule>
    <reaction evidence="16 17">
        <text>L-tyrosyl-[protein] + ATP = O-phospho-L-tyrosyl-[protein] + ADP + H(+)</text>
        <dbReference type="Rhea" id="RHEA:10596"/>
        <dbReference type="Rhea" id="RHEA-COMP:10136"/>
        <dbReference type="Rhea" id="RHEA-COMP:20101"/>
        <dbReference type="ChEBI" id="CHEBI:15378"/>
        <dbReference type="ChEBI" id="CHEBI:30616"/>
        <dbReference type="ChEBI" id="CHEBI:46858"/>
        <dbReference type="ChEBI" id="CHEBI:61978"/>
        <dbReference type="ChEBI" id="CHEBI:456216"/>
        <dbReference type="EC" id="2.7.10.2"/>
    </reaction>
</comment>
<comment type="catalytic activity">
    <molecule>Isoform 3</molecule>
    <reaction evidence="16">
        <text>L-tyrosyl-[protein] + ATP = O-phospho-L-tyrosyl-[protein] + ADP + H(+)</text>
        <dbReference type="Rhea" id="RHEA:10596"/>
        <dbReference type="Rhea" id="RHEA-COMP:10136"/>
        <dbReference type="Rhea" id="RHEA-COMP:20101"/>
        <dbReference type="ChEBI" id="CHEBI:15378"/>
        <dbReference type="ChEBI" id="CHEBI:30616"/>
        <dbReference type="ChEBI" id="CHEBI:46858"/>
        <dbReference type="ChEBI" id="CHEBI:61978"/>
        <dbReference type="ChEBI" id="CHEBI:456216"/>
        <dbReference type="EC" id="2.7.10.2"/>
    </reaction>
</comment>
<comment type="activity regulation">
    <text evidence="1 18">Phosphorylation by CSK at Tyr-530 inhibits kinase activity. Inhibitory phosphorylation at Tyr-530 is enhanced by heme. Further phosphorylation by CDK1 partially reactivates CSK-inactivated SRC and facilitates complete reactivation by protein tyrosine phosphatase PTPRC. Integrin engagement stimulates kinase activity. Phosphorylation by PTK2/FAK1 enhances kinase activity. Butein and pseudosubstrate-based peptide inhibitors like CIYKYYF act as inhibitors (By similarity). Phosphorylation at Tyr-419 increases kinase activity.</text>
</comment>
<comment type="subunit">
    <text evidence="2 3 9 11 12 14 15 18">Part of a complex comprised of PTPRA, BCAR1, BCAR3 (via SH2 domain) and SRC; the formation of the complex is dependent on integrin mediated-tyrosine phosphorylation of PTPRA (By similarity). Interacts with DDEF1/ASAP1; via the SH3 domain (By similarity). Interacts with CCPG1 (By similarity). Identified in a complex containing FGFR4, NCAM1, CDH2, PLCG1, FRS2, SRC, SHC1, GAP43 and CTTN (By similarity). Interacts with ERBB2, STAT1 and PNN (By similarity). Interacts with CDCP1, TGFB1I1 and TOM1L2 (By similarity). Interacts with the cytoplasmic domain of MUC1, phosphorylates it and increases binding of MUC1 with beta-catenin (By similarity). Interacts with RALGPS1; via the SH3 domain (By similarity). Interacts with CAV2 (tyrosine phosphorylated form) (By similarity). Interacts (via the SH3 domain and the protein kinase domain) with ARRB1; the interaction is independent of the phosphorylation state of SRC C-terminus (PubMed:10995467). Interacts with ARRB1 and ARRB2 (By similarity) (PubMed:10995467). Interacts with SRCIN1 (By similarity). Interacts with NDFIP2 and more weakly with NDFIP1 (By similarity). Interacts with PIK3CA and/or PIK3C2B, PTK2/FAK1 and ESR1 (dimethylated on arginine) (PubMed:8849729). Interacts with FASLG (By similarity). Interacts (via SH2 domain) with the 'Tyr-402' phosphorylated form of PTK2B/PYK2 (PubMed:8849729). Interacts (via SH2 domain) with FLT3 (tyrosine phosphorylated) (By similarity). Interacts (via SH2 and SH3 domain) with TNK2 (By similarity). Interacts (via protein kinase domain) with the tyrosine phosphorylated form of RUNX3 (via runt domain) (By similarity). Interacts with TRAF3 (via RING-type zinc finger domain) (By similarity). Interacts with RIGI, MAVS and TBK1 (By similarity). Interacts (via SH2 domain) with RACK1; the interaction is enhanced by tyrosine phosphorylation of RACK1 and inhibits SRC activity (By similarity). Interacts with EPHB1; activates the MAPK/ERK cascade to regulate cell migration (By similarity). Interacts with FCAMR (By similarity). Interacts with PDGFRA (tyrosine phosphorylated) (By similarity). Interacts with CSF1R (By similarity). Interacts with DDR1 (By similarity). Interacts (via SH2 domain) with the 'Tyr-9' phosphorylated form of PDPK1 (By similarity). Interacts with AMOTL2; this interaction promotes the translocation of phosphorylated SRC to peripheral cell-matrix adhesion sites (By similarity). Interacts with DDR2 and DAB2 (PubMed:11884411, PubMed:12473651, PubMed:16186108). Interacts with TRAP1 (By similarity). Interacts with CBLC; the interaction is enhanced when SRC is phosphorylated at Tyr-419 (By similarity). Interacts with ARHGEF5 (By similarity). Interacts (via cytoplasmic domain) with CEACAM1 (via SH2 domain); this interaction is regulated by trans-homophilic cell adhesion (PubMed:19948503). Interacts with MPP2 (By similarity). Interacts with PRR7 (By similarity). Interacts (via kinase domain and to a lesser extent the SH2 domain) directly with PDLIM4; this interaction results in PTPN13-mediated dephosphorylation of this protein leading to its inactivation (By similarity). Interacts with P85 (PIK3R1 or PIK3R2) (By similarity). Interacts with HNRNPA2B1 (By similarity). Interacts with IL6ST/gp130 (By similarity). Interacts (via SH3 domain) with PELP1 in the presence of 17-beta-estradiol (By similarity). Interacts with AMBRA1 (By similarity).</text>
</comment>
<comment type="interaction">
    <interactant intactId="EBI-7784541">
        <id>Q9WUD9</id>
    </interactant>
    <interactant intactId="EBI-1185084">
        <id>P22002</id>
        <label>Cacna1c</label>
    </interactant>
    <organismsDiffer>false</organismsDiffer>
    <experiments>4</experiments>
</comment>
<comment type="interaction">
    <interactant intactId="EBI-7784541">
        <id>Q9WUD9</id>
    </interactant>
    <interactant intactId="EBI-7784314">
        <id>P28648</id>
        <label>Cd63</label>
    </interactant>
    <organismsDiffer>false</organismsDiffer>
    <experiments>2</experiments>
</comment>
<comment type="interaction">
    <interactant intactId="EBI-7784541">
        <id>Q9WUD9</id>
    </interactant>
    <interactant intactId="EBI-8584374">
        <id>O08617</id>
        <label>Ptprr</label>
    </interactant>
    <organismsDiffer>false</organismsDiffer>
    <experiments>2</experiments>
</comment>
<comment type="interaction">
    <interactant intactId="EBI-7784541">
        <id>Q9WUD9</id>
    </interactant>
    <interactant intactId="EBI-968788">
        <id>P18031</id>
        <label>PTPN1</label>
    </interactant>
    <organismsDiffer>true</organismsDiffer>
    <experiments>2</experiments>
</comment>
<comment type="subcellular location">
    <subcellularLocation>
        <location evidence="2">Cell membrane</location>
        <topology evidence="2">Lipid-anchor</topology>
    </subcellularLocation>
    <subcellularLocation>
        <location evidence="2">Mitochondrion inner membrane</location>
    </subcellularLocation>
    <subcellularLocation>
        <location evidence="2">Nucleus</location>
    </subcellularLocation>
    <subcellularLocation>
        <location evidence="2">Cytoplasm</location>
        <location evidence="2">Cytoskeleton</location>
    </subcellularLocation>
    <subcellularLocation>
        <location evidence="3">Cytoplasm</location>
        <location evidence="3">Perinuclear region</location>
    </subcellularLocation>
    <subcellularLocation>
        <location evidence="2">Cell junction</location>
        <location evidence="2">Focal adhesion</location>
    </subcellularLocation>
    <subcellularLocation>
        <location evidence="3">Cell junction</location>
    </subcellularLocation>
    <text evidence="2 3">Localizes to focal adhesion sites following integrin engagement. Localization to focal adhesion sites requires myristoylation and the SH3 domain (By similarity). Colocalizes with PDLIM4 at the perinuclear region, but not at focal adhesions.</text>
</comment>
<comment type="alternative products">
    <event type="alternative splicing"/>
    <isoform>
        <id>Q9WUD9-1</id>
        <name>1</name>
        <name evidence="20">c-Src</name>
        <sequence type="displayed"/>
    </isoform>
    <isoform>
        <id>Q9WUD9-2</id>
        <name>2</name>
        <name>Neuronal Src</name>
        <name evidence="20">N1-Src</name>
        <sequence type="described" ref="VSP_053395"/>
    </isoform>
    <isoform>
        <id>Q9WUD9-3</id>
        <name>3</name>
        <name evidence="20">N2-Src</name>
        <sequence type="described" ref="VSP_061495"/>
    </isoform>
</comment>
<comment type="tissue specificity">
    <molecule>Isoform 1</molecule>
    <text evidence="10">Expressed at very low levels in the forebrain.</text>
</comment>
<comment type="tissue specificity">
    <molecule>Isoform 2</molecule>
    <text evidence="10">Expressed in the brain with highest expression in the pyramidal layers of the hippocampus and the granular layer of the dentate gyrus and moderate expression in cortical regions, with higher levels in the superficial layers than in the deep layers. May be neuron-specific.</text>
</comment>
<comment type="induction">
    <molecule>Isoform 2</molecule>
    <text evidence="10">Up-regulated by MK-801, an uncompetitive N-methyl-d-aspartate (NMDA) receptor antagonist, mostly in the superficial layers of the parietal, temporal, occipital and frontal cortices.</text>
</comment>
<comment type="PTM">
    <text evidence="1">Myristoylated at Gly-2, and this is essential for targeting to membranes.</text>
</comment>
<comment type="PTM">
    <text evidence="1 3 13 18">Dephosphorylated at Tyr-530 by PTPRJ. Phosphorylated on Tyr-530 by c-Src kinase (CSK). The phosphorylated form is termed pp60c-src (By similarity). Dephosphorylated by PTPRJ at Tyr-419. Normally maintained in an inactive conformation with the SH2 domain engaged with Tyr-530, the SH3 domain engaged with the SH2-kinase linker, and Tyr-419 dephosphorylated. Dephosphorylation of Tyr-530 as a result of protein tyrosine phosphatase (PTP) action disrupts the intramolecular interaction between the SH2 domain and Tyr-530, Tyr-419 can then become autophosphorylated, resulting in SRX activation. Phosphorylation of Tyr-530 by CSK allows this interaction to reform, resulting in SRC inactivation. CDK5-mediated phosphorylation at Ser-75 targets SRC to ubiquitin-dependent degradation and thus leads to cytoskeletal reorganization. Phosphorylated by PTK2/FAK1; this enhances kinase activity (By similarity). Phosphorylated by PTK2B/PYK2; this enhances kinase activity. Upon activation of IL6ST by IL6, Tyr-419 is phosphorylated and Tyr-530 dephosphorylated (By similarity).</text>
</comment>
<comment type="PTM">
    <molecule>Isoform 1</molecule>
    <text evidence="16">Displays reduced levels of autophosphorylation at Tyr-419 compared to isoforms 2 and 3.</text>
</comment>
<comment type="PTM">
    <molecule>Isoform 2</molecule>
    <text evidence="16">Displays enhanced levels of autophosphorylation at Tyr-419 compared to isoform 1.</text>
</comment>
<comment type="PTM">
    <molecule>Isoform 3</molecule>
    <text evidence="16">Displays enhanced levels of autophosphorylation at Tyr-419 compared to isoform 1 (PubMed:26026271). Shows reduced phosphorylation at Tyr-527 compared to isoforms 1 and 2 (PubMed:26026271).</text>
</comment>
<comment type="PTM">
    <text evidence="1">S-nitrosylation is important for activation of its kinase activity.</text>
</comment>
<comment type="PTM">
    <text evidence="1">Ubiquitinated in response to CDK5-mediated phosphorylation. Ubiquitination mediated by CBLC requires SRC autophosphorylation at Tyr-419 and may lead to lysosomal degradation (By similarity).</text>
</comment>
<comment type="similarity">
    <text evidence="4">Belongs to the protein kinase superfamily. Tyr protein kinase family. SRC subfamily.</text>
</comment>
<keyword id="KW-0025">Alternative splicing</keyword>
<keyword id="KW-0067">ATP-binding</keyword>
<keyword id="KW-0130">Cell adhesion</keyword>
<keyword id="KW-0131">Cell cycle</keyword>
<keyword id="KW-0965">Cell junction</keyword>
<keyword id="KW-1003">Cell membrane</keyword>
<keyword id="KW-0963">Cytoplasm</keyword>
<keyword id="KW-0206">Cytoskeleton</keyword>
<keyword id="KW-0391">Immunity</keyword>
<keyword id="KW-0418">Kinase</keyword>
<keyword id="KW-0449">Lipoprotein</keyword>
<keyword id="KW-0472">Membrane</keyword>
<keyword id="KW-0496">Mitochondrion</keyword>
<keyword id="KW-0999">Mitochondrion inner membrane</keyword>
<keyword id="KW-0519">Myristate</keyword>
<keyword id="KW-0547">Nucleotide-binding</keyword>
<keyword id="KW-0539">Nucleus</keyword>
<keyword id="KW-0597">Phosphoprotein</keyword>
<keyword id="KW-0656">Proto-oncogene</keyword>
<keyword id="KW-1185">Reference proteome</keyword>
<keyword id="KW-0727">SH2 domain</keyword>
<keyword id="KW-0728">SH3 domain</keyword>
<keyword id="KW-0808">Transferase</keyword>
<keyword id="KW-0829">Tyrosine-protein kinase</keyword>
<keyword id="KW-0832">Ubl conjugation</keyword>
<evidence type="ECO:0000250" key="1"/>
<evidence type="ECO:0000250" key="2">
    <source>
        <dbReference type="UniProtKB" id="P05480"/>
    </source>
</evidence>
<evidence type="ECO:0000250" key="3">
    <source>
        <dbReference type="UniProtKB" id="P12931"/>
    </source>
</evidence>
<evidence type="ECO:0000255" key="4">
    <source>
        <dbReference type="PROSITE-ProRule" id="PRU00159"/>
    </source>
</evidence>
<evidence type="ECO:0000255" key="5">
    <source>
        <dbReference type="PROSITE-ProRule" id="PRU00191"/>
    </source>
</evidence>
<evidence type="ECO:0000255" key="6">
    <source>
        <dbReference type="PROSITE-ProRule" id="PRU00192"/>
    </source>
</evidence>
<evidence type="ECO:0000255" key="7">
    <source>
        <dbReference type="PROSITE-ProRule" id="PRU10028"/>
    </source>
</evidence>
<evidence type="ECO:0000256" key="8">
    <source>
        <dbReference type="SAM" id="MobiDB-lite"/>
    </source>
</evidence>
<evidence type="ECO:0000269" key="9">
    <source>
    </source>
</evidence>
<evidence type="ECO:0000269" key="10">
    <source>
    </source>
</evidence>
<evidence type="ECO:0000269" key="11">
    <source>
    </source>
</evidence>
<evidence type="ECO:0000269" key="12">
    <source>
    </source>
</evidence>
<evidence type="ECO:0000269" key="13">
    <source>
    </source>
</evidence>
<evidence type="ECO:0000269" key="14">
    <source>
    </source>
</evidence>
<evidence type="ECO:0000269" key="15">
    <source>
    </source>
</evidence>
<evidence type="ECO:0000269" key="16">
    <source>
    </source>
</evidence>
<evidence type="ECO:0000269" key="17">
    <source>
    </source>
</evidence>
<evidence type="ECO:0000269" key="18">
    <source>
    </source>
</evidence>
<evidence type="ECO:0000303" key="19">
    <source>
    </source>
</evidence>
<evidence type="ECO:0000303" key="20">
    <source>
    </source>
</evidence>
<evidence type="ECO:0000305" key="21"/>
<evidence type="ECO:0007744" key="22">
    <source>
    </source>
</evidence>
<gene>
    <name type="primary">Src</name>
</gene>